<sequence>MYQVSGQRPSGCDAPYGAPSAAPGPAQTLSLLPGLEVVTGSTHPAEAAPEEGSLEEAATPMPQGNGPGIPQGLDSTDLDVPTEAVTCQPQGNPLGCTPLLPNDSGHPSELGGTRRAGNGALGGPKAHRKLQTHPSLASQGSKKSKSSSKSTTSQIPLQAQEDCCVHCILSCLFCEFLTLCNIVLDCATCGSCSSEDSCLCCCCCGSGECADCDLPCDLDCGILDACCESADCLEICMECCGLCFSS</sequence>
<keyword id="KW-0963">Cytoplasm</keyword>
<keyword id="KW-0217">Developmental protein</keyword>
<keyword id="KW-0221">Differentiation</keyword>
<keyword id="KW-0539">Nucleus</keyword>
<keyword id="KW-1267">Proteomics identification</keyword>
<keyword id="KW-1185">Reference proteome</keyword>
<reference key="1">
    <citation type="journal article" date="1997" name="Mamm. Genome">
        <title>The gene encoding I-mf (Mdfi) maps to human chromosome 6p21 and mouse chromosome 17.</title>
        <authorList>
            <person name="Kraut N."/>
        </authorList>
    </citation>
    <scope>NUCLEOTIDE SEQUENCE [MRNA]</scope>
    <source>
        <tissue>Fetal brain</tissue>
    </source>
</reference>
<reference key="2">
    <citation type="journal article" date="2003" name="Nature">
        <title>The DNA sequence and analysis of human chromosome 6.</title>
        <authorList>
            <person name="Mungall A.J."/>
            <person name="Palmer S.A."/>
            <person name="Sims S.K."/>
            <person name="Edwards C.A."/>
            <person name="Ashurst J.L."/>
            <person name="Wilming L."/>
            <person name="Jones M.C."/>
            <person name="Horton R."/>
            <person name="Hunt S.E."/>
            <person name="Scott C.E."/>
            <person name="Gilbert J.G.R."/>
            <person name="Clamp M.E."/>
            <person name="Bethel G."/>
            <person name="Milne S."/>
            <person name="Ainscough R."/>
            <person name="Almeida J.P."/>
            <person name="Ambrose K.D."/>
            <person name="Andrews T.D."/>
            <person name="Ashwell R.I.S."/>
            <person name="Babbage A.K."/>
            <person name="Bagguley C.L."/>
            <person name="Bailey J."/>
            <person name="Banerjee R."/>
            <person name="Barker D.J."/>
            <person name="Barlow K.F."/>
            <person name="Bates K."/>
            <person name="Beare D.M."/>
            <person name="Beasley H."/>
            <person name="Beasley O."/>
            <person name="Bird C.P."/>
            <person name="Blakey S.E."/>
            <person name="Bray-Allen S."/>
            <person name="Brook J."/>
            <person name="Brown A.J."/>
            <person name="Brown J.Y."/>
            <person name="Burford D.C."/>
            <person name="Burrill W."/>
            <person name="Burton J."/>
            <person name="Carder C."/>
            <person name="Carter N.P."/>
            <person name="Chapman J.C."/>
            <person name="Clark S.Y."/>
            <person name="Clark G."/>
            <person name="Clee C.M."/>
            <person name="Clegg S."/>
            <person name="Cobley V."/>
            <person name="Collier R.E."/>
            <person name="Collins J.E."/>
            <person name="Colman L.K."/>
            <person name="Corby N.R."/>
            <person name="Coville G.J."/>
            <person name="Culley K.M."/>
            <person name="Dhami P."/>
            <person name="Davies J."/>
            <person name="Dunn M."/>
            <person name="Earthrowl M.E."/>
            <person name="Ellington A.E."/>
            <person name="Evans K.A."/>
            <person name="Faulkner L."/>
            <person name="Francis M.D."/>
            <person name="Frankish A."/>
            <person name="Frankland J."/>
            <person name="French L."/>
            <person name="Garner P."/>
            <person name="Garnett J."/>
            <person name="Ghori M.J."/>
            <person name="Gilby L.M."/>
            <person name="Gillson C.J."/>
            <person name="Glithero R.J."/>
            <person name="Grafham D.V."/>
            <person name="Grant M."/>
            <person name="Gribble S."/>
            <person name="Griffiths C."/>
            <person name="Griffiths M.N.D."/>
            <person name="Hall R."/>
            <person name="Halls K.S."/>
            <person name="Hammond S."/>
            <person name="Harley J.L."/>
            <person name="Hart E.A."/>
            <person name="Heath P.D."/>
            <person name="Heathcott R."/>
            <person name="Holmes S.J."/>
            <person name="Howden P.J."/>
            <person name="Howe K.L."/>
            <person name="Howell G.R."/>
            <person name="Huckle E."/>
            <person name="Humphray S.J."/>
            <person name="Humphries M.D."/>
            <person name="Hunt A.R."/>
            <person name="Johnson C.M."/>
            <person name="Joy A.A."/>
            <person name="Kay M."/>
            <person name="Keenan S.J."/>
            <person name="Kimberley A.M."/>
            <person name="King A."/>
            <person name="Laird G.K."/>
            <person name="Langford C."/>
            <person name="Lawlor S."/>
            <person name="Leongamornlert D.A."/>
            <person name="Leversha M."/>
            <person name="Lloyd C.R."/>
            <person name="Lloyd D.M."/>
            <person name="Loveland J.E."/>
            <person name="Lovell J."/>
            <person name="Martin S."/>
            <person name="Mashreghi-Mohammadi M."/>
            <person name="Maslen G.L."/>
            <person name="Matthews L."/>
            <person name="McCann O.T."/>
            <person name="McLaren S.J."/>
            <person name="McLay K."/>
            <person name="McMurray A."/>
            <person name="Moore M.J.F."/>
            <person name="Mullikin J.C."/>
            <person name="Niblett D."/>
            <person name="Nickerson T."/>
            <person name="Novik K.L."/>
            <person name="Oliver K."/>
            <person name="Overton-Larty E.K."/>
            <person name="Parker A."/>
            <person name="Patel R."/>
            <person name="Pearce A.V."/>
            <person name="Peck A.I."/>
            <person name="Phillimore B.J.C.T."/>
            <person name="Phillips S."/>
            <person name="Plumb R.W."/>
            <person name="Porter K.M."/>
            <person name="Ramsey Y."/>
            <person name="Ranby S.A."/>
            <person name="Rice C.M."/>
            <person name="Ross M.T."/>
            <person name="Searle S.M."/>
            <person name="Sehra H.K."/>
            <person name="Sheridan E."/>
            <person name="Skuce C.D."/>
            <person name="Smith S."/>
            <person name="Smith M."/>
            <person name="Spraggon L."/>
            <person name="Squares S.L."/>
            <person name="Steward C.A."/>
            <person name="Sycamore N."/>
            <person name="Tamlyn-Hall G."/>
            <person name="Tester J."/>
            <person name="Theaker A.J."/>
            <person name="Thomas D.W."/>
            <person name="Thorpe A."/>
            <person name="Tracey A."/>
            <person name="Tromans A."/>
            <person name="Tubby B."/>
            <person name="Wall M."/>
            <person name="Wallis J.M."/>
            <person name="West A.P."/>
            <person name="White S.S."/>
            <person name="Whitehead S.L."/>
            <person name="Whittaker H."/>
            <person name="Wild A."/>
            <person name="Willey D.J."/>
            <person name="Wilmer T.E."/>
            <person name="Wood J.M."/>
            <person name="Wray P.W."/>
            <person name="Wyatt J.C."/>
            <person name="Young L."/>
            <person name="Younger R.M."/>
            <person name="Bentley D.R."/>
            <person name="Coulson A."/>
            <person name="Durbin R.M."/>
            <person name="Hubbard T."/>
            <person name="Sulston J.E."/>
            <person name="Dunham I."/>
            <person name="Rogers J."/>
            <person name="Beck S."/>
        </authorList>
    </citation>
    <scope>NUCLEOTIDE SEQUENCE [LARGE SCALE GENOMIC DNA]</scope>
</reference>
<reference key="3">
    <citation type="journal article" date="2004" name="Genome Res.">
        <title>The status, quality, and expansion of the NIH full-length cDNA project: the Mammalian Gene Collection (MGC).</title>
        <authorList>
            <consortium name="The MGC Project Team"/>
        </authorList>
    </citation>
    <scope>NUCLEOTIDE SEQUENCE [LARGE SCALE MRNA]</scope>
    <source>
        <tissue>Muscle</tissue>
    </source>
</reference>
<reference key="4">
    <citation type="journal article" date="2007" name="J. Mol. Biol.">
        <title>Developmental regulators containing the I-mfa domain interact with T cyclins and Tat and modulate transcription.</title>
        <authorList>
            <person name="Wang Q."/>
            <person name="Young T.M."/>
            <person name="Mathews M.B."/>
            <person name="Pe'ery T."/>
        </authorList>
    </citation>
    <scope>INTERACTION WITH CCNT2</scope>
</reference>
<reference key="5">
    <citation type="journal article" date="2023" name="Science">
        <title>MyoD-family inhibitor proteins act as auxiliary subunits of Piezo channels.</title>
        <authorList>
            <person name="Zhou Z."/>
            <person name="Ma X."/>
            <person name="Lin Y."/>
            <person name="Cheng D."/>
            <person name="Bavi N."/>
            <person name="Secker G.A."/>
            <person name="Li J.V."/>
            <person name="Janbandhu V."/>
            <person name="Sutton D.L."/>
            <person name="Scott H.S."/>
            <person name="Yao M."/>
            <person name="Harvey R.P."/>
            <person name="Harvey N.L."/>
            <person name="Corry B."/>
            <person name="Zhang Y."/>
            <person name="Cox C.D."/>
        </authorList>
    </citation>
    <scope>FUNCTION</scope>
    <scope>INTERACTION WITH PIEZO1 AND PIEZO2</scope>
</reference>
<evidence type="ECO:0000250" key="1"/>
<evidence type="ECO:0000250" key="2">
    <source>
        <dbReference type="UniProtKB" id="P70331"/>
    </source>
</evidence>
<evidence type="ECO:0000256" key="3">
    <source>
        <dbReference type="SAM" id="MobiDB-lite"/>
    </source>
</evidence>
<evidence type="ECO:0000269" key="4">
    <source>
    </source>
</evidence>
<evidence type="ECO:0000269" key="5">
    <source>
    </source>
</evidence>
<evidence type="ECO:0000305" key="6"/>
<feature type="chain" id="PRO_0000096324" description="MyoD family inhibitor">
    <location>
        <begin position="1"/>
        <end position="246"/>
    </location>
</feature>
<feature type="domain" description="MDFI">
    <location>
        <begin position="99"/>
        <end position="246"/>
    </location>
</feature>
<feature type="region of interest" description="Disordered" evidence="3">
    <location>
        <begin position="1"/>
        <end position="76"/>
    </location>
</feature>
<feature type="region of interest" description="Disordered" evidence="3">
    <location>
        <begin position="91"/>
        <end position="151"/>
    </location>
</feature>
<feature type="compositionally biased region" description="Low complexity" evidence="3">
    <location>
        <begin position="14"/>
        <end position="26"/>
    </location>
</feature>
<proteinExistence type="evidence at protein level"/>
<accession>Q99750</accession>
<comment type="function">
    <text evidence="1">Inhibits the transactivation activity of the Myod family of myogenic factors and represses myogenesis (By similarity). Acts by associating with Myod family members and retaining them in the cytoplasm by masking their nuclear localization signals (By similarity). Can also interfere with the DNA-binding activity of Myod family members (By similarity). Plays an important role in trophoblast and chondrogenic differentiation (By similarity). Regulates the transcriptional activity of TCF7L1/TCF3 by interacting directly with TCF7L1/TCF3 and preventing it from binding DNA (By similarity). Binds to the axin complex, resulting in an increase in the level of free beta-catenin (By similarity). Affects axin regulation of the WNT and JNK signaling pathways (By similarity). Regulates the activity of mechanosensitive Piezo channel (PubMed:37590348).</text>
</comment>
<comment type="subunit">
    <text evidence="2 4 5">Interacts (via C-terminus) with AXIN1 and LEF1 (By similarity). Interacts with CCNT2 (PubMed:17289077). Interacts (via C-terminus) with Piezo channel composed of PIEZO1 or PIEZO2; the interaction prolongs Piezo channel inactivation (PubMed:37590348).</text>
</comment>
<comment type="interaction">
    <interactant intactId="EBI-724076">
        <id>Q99750</id>
    </interactant>
    <interactant intactId="EBI-7451846">
        <id>Q16613</id>
        <label>AANAT</label>
    </interactant>
    <organismsDiffer>false</organismsDiffer>
    <experiments>6</experiments>
</comment>
<comment type="interaction">
    <interactant intactId="EBI-724076">
        <id>Q99750</id>
    </interactant>
    <interactant intactId="EBI-16432404">
        <id>A0A0S2Z645</id>
        <label>ABCF3</label>
    </interactant>
    <organismsDiffer>false</organismsDiffer>
    <experiments>3</experiments>
</comment>
<comment type="interaction">
    <interactant intactId="EBI-724076">
        <id>Q99750</id>
    </interactant>
    <interactant intactId="EBI-12318443">
        <id>Q8NFV4-4</id>
        <label>ABHD11</label>
    </interactant>
    <organismsDiffer>false</organismsDiffer>
    <experiments>3</experiments>
</comment>
<comment type="interaction">
    <interactant intactId="EBI-724076">
        <id>Q99750</id>
    </interactant>
    <interactant intactId="EBI-10221726">
        <id>P82987</id>
        <label>ADAMTSL3</label>
    </interactant>
    <organismsDiffer>false</organismsDiffer>
    <experiments>6</experiments>
</comment>
<comment type="interaction">
    <interactant intactId="EBI-724076">
        <id>Q99750</id>
    </interactant>
    <interactant intactId="EBI-12015266">
        <id>P18825</id>
        <label>ADRA2C</label>
    </interactant>
    <organismsDiffer>false</organismsDiffer>
    <experiments>3</experiments>
</comment>
<comment type="interaction">
    <interactant intactId="EBI-724076">
        <id>Q99750</id>
    </interactant>
    <interactant intactId="EBI-10255023">
        <id>Q6ZN18-2</id>
        <label>AEBP2</label>
    </interactant>
    <organismsDiffer>false</organismsDiffer>
    <experiments>3</experiments>
</comment>
<comment type="interaction">
    <interactant intactId="EBI-724076">
        <id>Q99750</id>
    </interactant>
    <interactant intactId="EBI-727098">
        <id>P21549</id>
        <label>AGXT</label>
    </interactant>
    <organismsDiffer>false</organismsDiffer>
    <experiments>5</experiments>
</comment>
<comment type="interaction">
    <interactant intactId="EBI-724076">
        <id>Q99750</id>
    </interactant>
    <interactant intactId="EBI-10222656">
        <id>Q02040-3</id>
        <label>AKAP17A</label>
    </interactant>
    <organismsDiffer>false</organismsDiffer>
    <experiments>3</experiments>
</comment>
<comment type="interaction">
    <interactant intactId="EBI-724076">
        <id>Q99750</id>
    </interactant>
    <interactant intactId="EBI-12051311">
        <id>Q9XRX5-2</id>
        <label>ANKRD13C-DT</label>
    </interactant>
    <organismsDiffer>false</organismsDiffer>
    <experiments>3</experiments>
</comment>
<comment type="interaction">
    <interactant intactId="EBI-724076">
        <id>Q99750</id>
    </interactant>
    <interactant intactId="EBI-745213">
        <id>P29972</id>
        <label>AQP1</label>
    </interactant>
    <organismsDiffer>false</organismsDiffer>
    <experiments>7</experiments>
</comment>
<comment type="interaction">
    <interactant intactId="EBI-724076">
        <id>Q99750</id>
    </interactant>
    <interactant intactId="EBI-746103">
        <id>P55064</id>
        <label>AQP5</label>
    </interactant>
    <organismsDiffer>false</organismsDiffer>
    <experiments>3</experiments>
</comment>
<comment type="interaction">
    <interactant intactId="EBI-724076">
        <id>Q99750</id>
    </interactant>
    <interactant intactId="EBI-308663">
        <id>A7KAX9</id>
        <label>ARHGAP32</label>
    </interactant>
    <organismsDiffer>false</organismsDiffer>
    <experiments>3</experiments>
</comment>
<comment type="interaction">
    <interactant intactId="EBI-724076">
        <id>Q99750</id>
    </interactant>
    <interactant intactId="EBI-948603">
        <id>Q03989</id>
        <label>ARID5A</label>
    </interactant>
    <organismsDiffer>false</organismsDiffer>
    <experiments>5</experiments>
</comment>
<comment type="interaction">
    <interactant intactId="EBI-724076">
        <id>Q99750</id>
    </interactant>
    <interactant intactId="EBI-742909">
        <id>Q9H6L4</id>
        <label>ARMC7</label>
    </interactant>
    <organismsDiffer>false</organismsDiffer>
    <experiments>3</experiments>
</comment>
<comment type="interaction">
    <interactant intactId="EBI-724076">
        <id>Q99750</id>
    </interactant>
    <interactant intactId="EBI-745689">
        <id>Q7L5A3</id>
        <label>ATOSB</label>
    </interactant>
    <organismsDiffer>false</organismsDiffer>
    <experiments>4</experiments>
</comment>
<comment type="interaction">
    <interactant intactId="EBI-724076">
        <id>Q99750</id>
    </interactant>
    <interactant intactId="EBI-1049505">
        <id>P30049</id>
        <label>ATP5F1D</label>
    </interactant>
    <organismsDiffer>false</organismsDiffer>
    <experiments>3</experiments>
</comment>
<comment type="interaction">
    <interactant intactId="EBI-724076">
        <id>Q99750</id>
    </interactant>
    <interactant intactId="EBI-8640233">
        <id>Q5T686</id>
        <label>AVPI1</label>
    </interactant>
    <organismsDiffer>false</organismsDiffer>
    <experiments>7</experiments>
</comment>
<comment type="interaction">
    <interactant intactId="EBI-724076">
        <id>Q99750</id>
    </interactant>
    <interactant intactId="EBI-16429430">
        <id>A0A0S2Z4M1</id>
        <label>AXIN1</label>
    </interactant>
    <organismsDiffer>false</organismsDiffer>
    <experiments>3</experiments>
</comment>
<comment type="interaction">
    <interactant intactId="EBI-724076">
        <id>Q99750</id>
    </interactant>
    <interactant intactId="EBI-710484">
        <id>O15169</id>
        <label>AXIN1</label>
    </interactant>
    <organismsDiffer>false</organismsDiffer>
    <experiments>3</experiments>
</comment>
<comment type="interaction">
    <interactant intactId="EBI-724076">
        <id>Q99750</id>
    </interactant>
    <interactant intactId="EBI-747185">
        <id>O95817</id>
        <label>BAG3</label>
    </interactant>
    <organismsDiffer>false</organismsDiffer>
    <experiments>3</experiments>
</comment>
<comment type="interaction">
    <interactant intactId="EBI-724076">
        <id>Q99750</id>
    </interactant>
    <interactant intactId="EBI-742750">
        <id>Q8TBE0</id>
        <label>BAHD1</label>
    </interactant>
    <organismsDiffer>false</organismsDiffer>
    <experiments>7</experiments>
</comment>
<comment type="interaction">
    <interactant intactId="EBI-724076">
        <id>Q99750</id>
    </interactant>
    <interactant intactId="EBI-16429704">
        <id>A0A0S2Z5G4</id>
        <label>BANP</label>
    </interactant>
    <organismsDiffer>false</organismsDiffer>
    <experiments>3</experiments>
</comment>
<comment type="interaction">
    <interactant intactId="EBI-724076">
        <id>Q99750</id>
    </interactant>
    <interactant intactId="EBI-16429313">
        <id>B4DE54</id>
        <label>BANP</label>
    </interactant>
    <organismsDiffer>false</organismsDiffer>
    <experiments>3</experiments>
</comment>
<comment type="interaction">
    <interactant intactId="EBI-724076">
        <id>Q99750</id>
    </interactant>
    <interactant intactId="EBI-11524452">
        <id>Q8N9N5-2</id>
        <label>BANP</label>
    </interactant>
    <organismsDiffer>false</organismsDiffer>
    <experiments>6</experiments>
</comment>
<comment type="interaction">
    <interactant intactId="EBI-724076">
        <id>Q99750</id>
    </interactant>
    <interactant intactId="EBI-16429296">
        <id>Q8N9N5-7</id>
        <label>BANP</label>
    </interactant>
    <organismsDiffer>false</organismsDiffer>
    <experiments>3</experiments>
</comment>
<comment type="interaction">
    <interactant intactId="EBI-724076">
        <id>Q99750</id>
    </interactant>
    <interactant intactId="EBI-748297">
        <id>Q9BXC9</id>
        <label>BBS2</label>
    </interactant>
    <organismsDiffer>false</organismsDiffer>
    <experiments>7</experiments>
</comment>
<comment type="interaction">
    <interactant intactId="EBI-724076">
        <id>Q99750</id>
    </interactant>
    <interactant intactId="EBI-10212133">
        <id>P50895</id>
        <label>BCAM</label>
    </interactant>
    <organismsDiffer>false</organismsDiffer>
    <experiments>3</experiments>
</comment>
<comment type="interaction">
    <interactant intactId="EBI-724076">
        <id>Q99750</id>
    </interactant>
    <interactant intactId="EBI-10174813">
        <id>A8KA13</id>
        <label>BCL6B</label>
    </interactant>
    <organismsDiffer>false</organismsDiffer>
    <experiments>3</experiments>
</comment>
<comment type="interaction">
    <interactant intactId="EBI-724076">
        <id>Q99750</id>
    </interactant>
    <interactant intactId="EBI-7162175">
        <id>Q9HBH7</id>
        <label>BEX1</label>
    </interactant>
    <organismsDiffer>false</organismsDiffer>
    <experiments>6</experiments>
</comment>
<comment type="interaction">
    <interactant intactId="EBI-724076">
        <id>Q99750</id>
    </interactant>
    <interactant intactId="EBI-745073">
        <id>Q9BXY8</id>
        <label>BEX2</label>
    </interactant>
    <organismsDiffer>false</organismsDiffer>
    <experiments>4</experiments>
</comment>
<comment type="interaction">
    <interactant intactId="EBI-724076">
        <id>Q99750</id>
    </interactant>
    <interactant intactId="EBI-741753">
        <id>Q00994</id>
        <label>BEX3</label>
    </interactant>
    <organismsDiffer>false</organismsDiffer>
    <experiments>3</experiments>
</comment>
<comment type="interaction">
    <interactant intactId="EBI-724076">
        <id>Q99750</id>
    </interactant>
    <interactant intactId="EBI-744052">
        <id>Q5T681</id>
        <label>C10orf62</label>
    </interactant>
    <organismsDiffer>false</organismsDiffer>
    <experiments>7</experiments>
</comment>
<comment type="interaction">
    <interactant intactId="EBI-724076">
        <id>Q99750</id>
    </interactant>
    <interactant intactId="EBI-747505">
        <id>Q8TAB5</id>
        <label>C1orf216</label>
    </interactant>
    <organismsDiffer>false</organismsDiffer>
    <experiments>3</experiments>
</comment>
<comment type="interaction">
    <interactant intactId="EBI-724076">
        <id>Q99750</id>
    </interactant>
    <interactant intactId="EBI-7317823">
        <id>Q6P5X5</id>
        <label>C22orf39</label>
    </interactant>
    <organismsDiffer>false</organismsDiffer>
    <experiments>3</experiments>
</comment>
<comment type="interaction">
    <interactant intactId="EBI-724076">
        <id>Q99750</id>
    </interactant>
    <interactant intactId="EBI-715389">
        <id>Q9H7E9</id>
        <label>C8orf33</label>
    </interactant>
    <organismsDiffer>false</organismsDiffer>
    <experiments>5</experiments>
</comment>
<comment type="interaction">
    <interactant intactId="EBI-724076">
        <id>Q99750</id>
    </interactant>
    <interactant intactId="EBI-751596">
        <id>Q96LL4</id>
        <label>C8orf48</label>
    </interactant>
    <organismsDiffer>false</organismsDiffer>
    <experiments>6</experiments>
</comment>
<comment type="interaction">
    <interactant intactId="EBI-724076">
        <id>Q99750</id>
    </interactant>
    <interactant intactId="EBI-744545">
        <id>Q8NEC5</id>
        <label>CATSPER1</label>
    </interactant>
    <organismsDiffer>false</organismsDiffer>
    <experiments>4</experiments>
</comment>
<comment type="interaction">
    <interactant intactId="EBI-724076">
        <id>Q99750</id>
    </interactant>
    <interactant intactId="EBI-748628">
        <id>O43439</id>
        <label>CBFA2T2</label>
    </interactant>
    <organismsDiffer>false</organismsDiffer>
    <experiments>4</experiments>
</comment>
<comment type="interaction">
    <interactant intactId="EBI-724076">
        <id>Q99750</id>
    </interactant>
    <interactant intactId="EBI-12196065">
        <id>Q8N7E2</id>
        <label>CBLL2</label>
    </interactant>
    <organismsDiffer>false</organismsDiffer>
    <experiments>3</experiments>
</comment>
<comment type="interaction">
    <interactant intactId="EBI-724076">
        <id>Q99750</id>
    </interactant>
    <interactant intactId="EBI-745934">
        <id>Q14781</id>
        <label>CBX2</label>
    </interactant>
    <organismsDiffer>false</organismsDiffer>
    <experiments>3</experiments>
</comment>
<comment type="interaction">
    <interactant intactId="EBI-724076">
        <id>Q99750</id>
    </interactant>
    <interactant intactId="EBI-11974585">
        <id>Q14781-2</id>
        <label>CBX2</label>
    </interactant>
    <organismsDiffer>false</organismsDiffer>
    <experiments>3</experiments>
</comment>
<comment type="interaction">
    <interactant intactId="EBI-724076">
        <id>Q99750</id>
    </interactant>
    <interactant intactId="EBI-712912">
        <id>Q9HC52</id>
        <label>CBX8</label>
    </interactant>
    <organismsDiffer>false</organismsDiffer>
    <experiments>3</experiments>
</comment>
<comment type="interaction">
    <interactant intactId="EBI-724076">
        <id>Q99750</id>
    </interactant>
    <interactant intactId="EBI-10245204">
        <id>Q5T0F9</id>
        <label>CC2D1B</label>
    </interactant>
    <organismsDiffer>false</organismsDiffer>
    <experiments>3</experiments>
</comment>
<comment type="interaction">
    <interactant intactId="EBI-724076">
        <id>Q99750</id>
    </interactant>
    <interactant intactId="EBI-13176876">
        <id>Q5T0F9-3</id>
        <label>CC2D1B</label>
    </interactant>
    <organismsDiffer>false</organismsDiffer>
    <experiments>3</experiments>
</comment>
<comment type="interaction">
    <interactant intactId="EBI-724076">
        <id>Q99750</id>
    </interactant>
    <interactant intactId="EBI-744311">
        <id>Q8IYX3</id>
        <label>CCDC116</label>
    </interactant>
    <organismsDiffer>false</organismsDiffer>
    <experiments>7</experiments>
</comment>
<comment type="interaction">
    <interactant intactId="EBI-724076">
        <id>Q99750</id>
    </interactant>
    <interactant intactId="EBI-740814">
        <id>Q8N715</id>
        <label>CCDC185</label>
    </interactant>
    <organismsDiffer>false</organismsDiffer>
    <experiments>4</experiments>
</comment>
<comment type="interaction">
    <interactant intactId="EBI-724076">
        <id>Q99750</id>
    </interactant>
    <interactant intactId="EBI-10238351">
        <id>Q9NVL8</id>
        <label>CCDC198</label>
    </interactant>
    <organismsDiffer>false</organismsDiffer>
    <experiments>3</experiments>
</comment>
<comment type="interaction">
    <interactant intactId="EBI-724076">
        <id>Q99750</id>
    </interactant>
    <interactant intactId="EBI-12024864">
        <id>Q96S94-5</id>
        <label>CCNL2</label>
    </interactant>
    <organismsDiffer>false</organismsDiffer>
    <experiments>3</experiments>
</comment>
<comment type="interaction">
    <interactant intactId="EBI-724076">
        <id>Q99750</id>
    </interactant>
    <interactant intactId="EBI-11983537">
        <id>Q86Y33-5</id>
        <label>CDC20B</label>
    </interactant>
    <organismsDiffer>false</organismsDiffer>
    <experiments>3</experiments>
</comment>
<comment type="interaction">
    <interactant intactId="EBI-724076">
        <id>Q99750</id>
    </interactant>
    <interactant intactId="EBI-295634">
        <id>Q16543</id>
        <label>CDC37</label>
    </interactant>
    <organismsDiffer>false</organismsDiffer>
    <experiments>3</experiments>
</comment>
<comment type="interaction">
    <interactant intactId="EBI-724076">
        <id>Q99750</id>
    </interactant>
    <interactant intactId="EBI-5278764">
        <id>Q96GN5</id>
        <label>CDCA7L</label>
    </interactant>
    <organismsDiffer>false</organismsDiffer>
    <experiments>6</experiments>
</comment>
<comment type="interaction">
    <interactant intactId="EBI-724076">
        <id>Q99750</id>
    </interactant>
    <interactant intactId="EBI-3919850">
        <id>Q8IVW4</id>
        <label>CDKL3</label>
    </interactant>
    <organismsDiffer>false</organismsDiffer>
    <experiments>3</experiments>
</comment>
<comment type="interaction">
    <interactant intactId="EBI-724076">
        <id>Q99750</id>
    </interactant>
    <interactant intactId="EBI-1104570">
        <id>Q8IYX8</id>
        <label>CEP57L1</label>
    </interactant>
    <organismsDiffer>false</organismsDiffer>
    <experiments>6</experiments>
</comment>
<comment type="interaction">
    <interactant intactId="EBI-724076">
        <id>Q99750</id>
    </interactant>
    <interactant intactId="EBI-8525536">
        <id>O43745</id>
        <label>CHP2</label>
    </interactant>
    <organismsDiffer>false</organismsDiffer>
    <experiments>3</experiments>
</comment>
<comment type="interaction">
    <interactant intactId="EBI-724076">
        <id>Q99750</id>
    </interactant>
    <interactant intactId="EBI-11979451">
        <id>P07510-2</id>
        <label>CHRNG</label>
    </interactant>
    <organismsDiffer>false</organismsDiffer>
    <experiments>6</experiments>
</comment>
<comment type="interaction">
    <interactant intactId="EBI-724076">
        <id>Q99750</id>
    </interactant>
    <interactant intactId="EBI-12010090">
        <id>A8MYP8</id>
        <label>CIMAP1B</label>
    </interactant>
    <organismsDiffer>false</organismsDiffer>
    <experiments>3</experiments>
</comment>
<comment type="interaction">
    <interactant intactId="EBI-724076">
        <id>Q99750</id>
    </interactant>
    <interactant intactId="EBI-741032">
        <id>Q8NE01</id>
        <label>CNNM3</label>
    </interactant>
    <organismsDiffer>false</organismsDiffer>
    <experiments>6</experiments>
</comment>
<comment type="interaction">
    <interactant intactId="EBI-724076">
        <id>Q99750</id>
    </interactant>
    <interactant intactId="EBI-739773">
        <id>Q9BSW2</id>
        <label>CRACR2A</label>
    </interactant>
    <organismsDiffer>false</organismsDiffer>
    <experiments>3</experiments>
</comment>
<comment type="interaction">
    <interactant intactId="EBI-724076">
        <id>Q99750</id>
    </interactant>
    <interactant intactId="EBI-10192698">
        <id>Q02930-3</id>
        <label>CREB5</label>
    </interactant>
    <organismsDiffer>false</organismsDiffer>
    <experiments>8</experiments>
</comment>
<comment type="interaction">
    <interactant intactId="EBI-724076">
        <id>Q99750</id>
    </interactant>
    <interactant intactId="EBI-3870390">
        <id>P06850</id>
        <label>CRH</label>
    </interactant>
    <organismsDiffer>false</organismsDiffer>
    <experiments>3</experiments>
</comment>
<comment type="interaction">
    <interactant intactId="EBI-724076">
        <id>Q99750</id>
    </interactant>
    <interactant intactId="EBI-11045281">
        <id>Q9Y6M4-3</id>
        <label>CSNK1G3</label>
    </interactant>
    <organismsDiffer>false</organismsDiffer>
    <experiments>3</experiments>
</comment>
<comment type="interaction">
    <interactant intactId="EBI-724076">
        <id>Q99750</id>
    </interactant>
    <interactant intactId="EBI-10295404">
        <id>Q99895</id>
        <label>CTRC</label>
    </interactant>
    <organismsDiffer>false</organismsDiffer>
    <experiments>3</experiments>
</comment>
<comment type="interaction">
    <interactant intactId="EBI-724076">
        <id>Q99750</id>
    </interactant>
    <interactant intactId="EBI-10249414">
        <id>Q6DCB0</id>
        <label>DAAM2</label>
    </interactant>
    <organismsDiffer>false</organismsDiffer>
    <experiments>3</experiments>
</comment>
<comment type="interaction">
    <interactant intactId="EBI-724076">
        <id>Q99750</id>
    </interactant>
    <interactant intactId="EBI-12205861">
        <id>Q8NFT6-2</id>
        <label>DBF4B</label>
    </interactant>
    <organismsDiffer>false</organismsDiffer>
    <experiments>3</experiments>
</comment>
<comment type="interaction">
    <interactant intactId="EBI-724076">
        <id>Q99750</id>
    </interactant>
    <interactant intactId="EBI-2559044">
        <id>Q58WW2</id>
        <label>DCAF6</label>
    </interactant>
    <organismsDiffer>false</organismsDiffer>
    <experiments>3</experiments>
</comment>
<comment type="interaction">
    <interactant intactId="EBI-724076">
        <id>Q99750</id>
    </interactant>
    <interactant intactId="EBI-740686">
        <id>Q5TAQ9</id>
        <label>DCAF8</label>
    </interactant>
    <organismsDiffer>false</organismsDiffer>
    <experiments>6</experiments>
</comment>
<comment type="interaction">
    <interactant intactId="EBI-724076">
        <id>Q99750</id>
    </interactant>
    <interactant intactId="EBI-10275670">
        <id>Q8TF63</id>
        <label>DCANP1</label>
    </interactant>
    <organismsDiffer>false</organismsDiffer>
    <experiments>7</experiments>
</comment>
<comment type="interaction">
    <interactant intactId="EBI-724076">
        <id>Q99750</id>
    </interactant>
    <interactant intactId="EBI-746300">
        <id>Q96LJ7</id>
        <label>DHRS1</label>
    </interactant>
    <organismsDiffer>false</organismsDiffer>
    <experiments>4</experiments>
</comment>
<comment type="interaction">
    <interactant intactId="EBI-724076">
        <id>Q99750</id>
    </interactant>
    <interactant intactId="EBI-742864">
        <id>O94907</id>
        <label>DKK1</label>
    </interactant>
    <organismsDiffer>false</organismsDiffer>
    <experiments>4</experiments>
</comment>
<comment type="interaction">
    <interactant intactId="EBI-724076">
        <id>Q99750</id>
    </interactant>
    <interactant intactId="EBI-9679045">
        <id>Q9NQL9</id>
        <label>DMRT3</label>
    </interactant>
    <organismsDiffer>false</organismsDiffer>
    <experiments>6</experiments>
</comment>
<comment type="interaction">
    <interactant intactId="EBI-724076">
        <id>Q99750</id>
    </interactant>
    <interactant intactId="EBI-11514233">
        <id>P59910</id>
        <label>DNAJB13</label>
    </interactant>
    <organismsDiffer>false</organismsDiffer>
    <experiments>3</experiments>
</comment>
<comment type="interaction">
    <interactant intactId="EBI-724076">
        <id>Q99750</id>
    </interactant>
    <interactant intactId="EBI-923653">
        <id>Q9Y6K1</id>
        <label>DNMT3A</label>
    </interactant>
    <organismsDiffer>false</organismsDiffer>
    <experiments>3</experiments>
</comment>
<comment type="interaction">
    <interactant intactId="EBI-724076">
        <id>Q99750</id>
    </interactant>
    <interactant intactId="EBI-448771">
        <id>Q92608</id>
        <label>DOCK2</label>
    </interactant>
    <organismsDiffer>false</organismsDiffer>
    <experiments>8</experiments>
</comment>
<comment type="interaction">
    <interactant intactId="EBI-724076">
        <id>Q99750</id>
    </interactant>
    <interactant intactId="EBI-10694655">
        <id>Q7L591-3</id>
        <label>DOK3</label>
    </interactant>
    <organismsDiffer>false</organismsDiffer>
    <experiments>3</experiments>
</comment>
<comment type="interaction">
    <interactant intactId="EBI-724076">
        <id>Q99750</id>
    </interactant>
    <interactant intactId="EBI-4311709">
        <id>Q5JR98</id>
        <label>DYNLT4</label>
    </interactant>
    <organismsDiffer>false</organismsDiffer>
    <experiments>3</experiments>
</comment>
<comment type="interaction">
    <interactant intactId="EBI-724076">
        <id>Q99750</id>
    </interactant>
    <interactant intactId="EBI-743414">
        <id>O95967</id>
        <label>EFEMP2</label>
    </interactant>
    <organismsDiffer>false</organismsDiffer>
    <experiments>3</experiments>
</comment>
<comment type="interaction">
    <interactant intactId="EBI-724076">
        <id>Q99750</id>
    </interactant>
    <interactant intactId="EBI-10232522">
        <id>Q14240-2</id>
        <label>EIF4A2</label>
    </interactant>
    <organismsDiffer>false</organismsDiffer>
    <experiments>3</experiments>
</comment>
<comment type="interaction">
    <interactant intactId="EBI-724076">
        <id>Q99750</id>
    </interactant>
    <interactant intactId="EBI-742350">
        <id>Q14241</id>
        <label>ELOA</label>
    </interactant>
    <organismsDiffer>false</organismsDiffer>
    <experiments>6</experiments>
</comment>
<comment type="interaction">
    <interactant intactId="EBI-724076">
        <id>Q99750</id>
    </interactant>
    <interactant intactId="EBI-744099">
        <id>Q9H0I2</id>
        <label>ENKD1</label>
    </interactant>
    <organismsDiffer>false</organismsDiffer>
    <experiments>8</experiments>
</comment>
<comment type="interaction">
    <interactant intactId="EBI-724076">
        <id>Q99750</id>
    </interactant>
    <interactant intactId="EBI-12259414">
        <id>Q92731-3</id>
        <label>ESR2</label>
    </interactant>
    <organismsDiffer>false</organismsDiffer>
    <experiments>3</experiments>
</comment>
<comment type="interaction">
    <interactant intactId="EBI-724076">
        <id>Q99750</id>
    </interactant>
    <interactant intactId="EBI-10226932">
        <id>Q0VG06-3</id>
        <label>FAAP100</label>
    </interactant>
    <organismsDiffer>false</organismsDiffer>
    <experiments>3</experiments>
</comment>
<comment type="interaction">
    <interactant intactId="EBI-724076">
        <id>Q99750</id>
    </interactant>
    <interactant intactId="EBI-3943864">
        <id>Q8N9I5</id>
        <label>FADS6</label>
    </interactant>
    <organismsDiffer>false</organismsDiffer>
    <experiments>3</experiments>
</comment>
<comment type="interaction">
    <interactant intactId="EBI-724076">
        <id>Q99750</id>
    </interactant>
    <interactant intactId="EBI-12420808">
        <id>Q5T036</id>
        <label>FAM120AOS</label>
    </interactant>
    <organismsDiffer>false</organismsDiffer>
    <experiments>3</experiments>
</comment>
<comment type="interaction">
    <interactant intactId="EBI-724076">
        <id>Q99750</id>
    </interactant>
    <interactant intactId="EBI-741626">
        <id>Q9H5Z6</id>
        <label>FAM124B</label>
    </interactant>
    <organismsDiffer>false</organismsDiffer>
    <experiments>4</experiments>
</comment>
<comment type="interaction">
    <interactant intactId="EBI-724076">
        <id>Q99750</id>
    </interactant>
    <interactant intactId="EBI-719941">
        <id>Q3B820</id>
        <label>FAM161A</label>
    </interactant>
    <organismsDiffer>false</organismsDiffer>
    <experiments>6</experiments>
</comment>
<comment type="interaction">
    <interactant intactId="EBI-724076">
        <id>Q99750</id>
    </interactant>
    <interactant intactId="EBI-7225287">
        <id>Q96MY7</id>
        <label>FAM161B</label>
    </interactant>
    <organismsDiffer>false</organismsDiffer>
    <experiments>3</experiments>
</comment>
<comment type="interaction">
    <interactant intactId="EBI-724076">
        <id>Q99750</id>
    </interactant>
    <interactant intactId="EBI-2602739">
        <id>Q08E93</id>
        <label>FAM27E3</label>
    </interactant>
    <organismsDiffer>false</organismsDiffer>
    <experiments>3</experiments>
</comment>
<comment type="interaction">
    <interactant intactId="EBI-724076">
        <id>Q99750</id>
    </interactant>
    <interactant intactId="EBI-6658203">
        <id>Q86YD7</id>
        <label>FAM90A1</label>
    </interactant>
    <organismsDiffer>false</organismsDiffer>
    <experiments>3</experiments>
</comment>
<comment type="interaction">
    <interactant intactId="EBI-724076">
        <id>Q99750</id>
    </interactant>
    <interactant intactId="EBI-2513774">
        <id>O95363</id>
        <label>FARS2</label>
    </interactant>
    <organismsDiffer>false</organismsDiffer>
    <experiments>3</experiments>
</comment>
<comment type="interaction">
    <interactant intactId="EBI-724076">
        <id>Q99750</id>
    </interactant>
    <interactant intactId="EBI-744419">
        <id>Q96D16</id>
        <label>FBXL18</label>
    </interactant>
    <organismsDiffer>false</organismsDiffer>
    <experiments>5</experiments>
</comment>
<comment type="interaction">
    <interactant intactId="EBI-724076">
        <id>Q99750</id>
    </interactant>
    <interactant intactId="EBI-719816">
        <id>Q9NWN3</id>
        <label>FBXO34</label>
    </interactant>
    <organismsDiffer>false</organismsDiffer>
    <experiments>3</experiments>
</comment>
<comment type="interaction">
    <interactant intactId="EBI-724076">
        <id>Q99750</id>
    </interactant>
    <interactant intactId="EBI-11988727">
        <id>A0PJY2</id>
        <label>FEZF1</label>
    </interactant>
    <organismsDiffer>false</organismsDiffer>
    <experiments>3</experiments>
</comment>
<comment type="interaction">
    <interactant intactId="EBI-724076">
        <id>Q99750</id>
    </interactant>
    <interactant intactId="EBI-744935">
        <id>Q9BVV2</id>
        <label>FNDC11</label>
    </interactant>
    <organismsDiffer>false</organismsDiffer>
    <experiments>3</experiments>
</comment>
<comment type="interaction">
    <interactant intactId="EBI-724076">
        <id>Q99750</id>
    </interactant>
    <interactant intactId="EBI-11317801">
        <id>Q12950</id>
        <label>FOXD4</label>
    </interactant>
    <organismsDiffer>false</organismsDiffer>
    <experiments>3</experiments>
</comment>
<comment type="interaction">
    <interactant intactId="EBI-724076">
        <id>Q99750</id>
    </interactant>
    <interactant intactId="EBI-11320806">
        <id>Q9NU39</id>
        <label>FOXD4L1</label>
    </interactant>
    <organismsDiffer>false</organismsDiffer>
    <experiments>3</experiments>
</comment>
<comment type="interaction">
    <interactant intactId="EBI-724076">
        <id>Q99750</id>
    </interactant>
    <interactant intactId="EBI-11961494">
        <id>Q6VB84</id>
        <label>FOXD4L3</label>
    </interactant>
    <organismsDiffer>false</organismsDiffer>
    <experiments>3</experiments>
</comment>
<comment type="interaction">
    <interactant intactId="EBI-724076">
        <id>Q99750</id>
    </interactant>
    <interactant intactId="EBI-6425864">
        <id>Q3SYB3</id>
        <label>FOXD4L6</label>
    </interactant>
    <organismsDiffer>false</organismsDiffer>
    <experiments>6</experiments>
</comment>
<comment type="interaction">
    <interactant intactId="EBI-724076">
        <id>Q99750</id>
    </interactant>
    <interactant intactId="EBI-744352">
        <id>O14764</id>
        <label>GABRD</label>
    </interactant>
    <organismsDiffer>false</organismsDiffer>
    <experiments>3</experiments>
</comment>
<comment type="interaction">
    <interactant intactId="EBI-724076">
        <id>Q99750</id>
    </interactant>
    <interactant intactId="EBI-9090198">
        <id>P15976-2</id>
        <label>GATA1</label>
    </interactant>
    <organismsDiffer>false</organismsDiffer>
    <experiments>5</experiments>
</comment>
<comment type="interaction">
    <interactant intactId="EBI-724076">
        <id>Q99750</id>
    </interactant>
    <interactant intactId="EBI-2806671">
        <id>P23769</id>
        <label>GATA2</label>
    </interactant>
    <organismsDiffer>false</organismsDiffer>
    <experiments>4</experiments>
</comment>
<comment type="interaction">
    <interactant intactId="EBI-724076">
        <id>Q99750</id>
    </interactant>
    <interactant intactId="EBI-2116863">
        <id>Q99988</id>
        <label>GDF15</label>
    </interactant>
    <organismsDiffer>false</organismsDiffer>
    <experiments>5</experiments>
</comment>
<comment type="interaction">
    <interactant intactId="EBI-724076">
        <id>Q99750</id>
    </interactant>
    <interactant intactId="EBI-353997">
        <id>P04899</id>
        <label>GNAI2</label>
    </interactant>
    <organismsDiffer>false</organismsDiffer>
    <experiments>5</experiments>
</comment>
<comment type="interaction">
    <interactant intactId="EBI-724076">
        <id>Q99750</id>
    </interactant>
    <interactant intactId="EBI-11975289">
        <id>Q9Y223-2</id>
        <label>GNE</label>
    </interactant>
    <organismsDiffer>false</organismsDiffer>
    <experiments>3</experiments>
</comment>
<comment type="interaction">
    <interactant intactId="EBI-724076">
        <id>Q99750</id>
    </interactant>
    <interactant intactId="EBI-10220734">
        <id>P63218</id>
        <label>GNG5</label>
    </interactant>
    <organismsDiffer>false</organismsDiffer>
    <experiments>3</experiments>
</comment>
<comment type="interaction">
    <interactant intactId="EBI-724076">
        <id>Q99750</id>
    </interactant>
    <interactant intactId="EBI-751540">
        <id>O95872</id>
        <label>GPANK1</label>
    </interactant>
    <organismsDiffer>false</organismsDiffer>
    <experiments>3</experiments>
</comment>
<comment type="interaction">
    <interactant intactId="EBI-724076">
        <id>Q99750</id>
    </interactant>
    <interactant intactId="EBI-5666657">
        <id>Q9NWQ4</id>
        <label>GPATCH2L</label>
    </interactant>
    <organismsDiffer>false</organismsDiffer>
    <experiments>3</experiments>
</comment>
<comment type="interaction">
    <interactant intactId="EBI-724076">
        <id>Q99750</id>
    </interactant>
    <interactant intactId="EBI-11959863">
        <id>Q9NWQ4-1</id>
        <label>GPATCH2L</label>
    </interactant>
    <organismsDiffer>false</organismsDiffer>
    <experiments>3</experiments>
</comment>
<comment type="interaction">
    <interactant intactId="EBI-724076">
        <id>Q99750</id>
    </interactant>
    <interactant intactId="EBI-944395">
        <id>O60565</id>
        <label>GREM1</label>
    </interactant>
    <organismsDiffer>false</organismsDiffer>
    <experiments>3</experiments>
</comment>
<comment type="interaction">
    <interactant intactId="EBI-724076">
        <id>Q99750</id>
    </interactant>
    <interactant intactId="EBI-1045409">
        <id>Q9Y5Q8</id>
        <label>GTF3C5</label>
    </interactant>
    <organismsDiffer>false</organismsDiffer>
    <experiments>3</experiments>
</comment>
<comment type="interaction">
    <interactant intactId="EBI-724076">
        <id>Q99750</id>
    </interactant>
    <interactant intactId="EBI-11956675">
        <id>Q9GZV7</id>
        <label>HAPLN2</label>
    </interactant>
    <organismsDiffer>false</organismsDiffer>
    <experiments>3</experiments>
</comment>
<comment type="interaction">
    <interactant intactId="EBI-724076">
        <id>Q99750</id>
    </interactant>
    <interactant intactId="EBI-1237328">
        <id>Q8TF76</id>
        <label>HASPIN</label>
    </interactant>
    <organismsDiffer>false</organismsDiffer>
    <experiments>3</experiments>
</comment>
<comment type="interaction">
    <interactant intactId="EBI-724076">
        <id>Q99750</id>
    </interactant>
    <interactant intactId="EBI-7399002">
        <id>B4DNA4</id>
        <label>hCG_20425</label>
    </interactant>
    <organismsDiffer>false</organismsDiffer>
    <experiments>3</experiments>
</comment>
<comment type="interaction">
    <interactant intactId="EBI-724076">
        <id>Q99750</id>
    </interactant>
    <interactant intactId="EBI-751092">
        <id>Q9NQ87</id>
        <label>HEYL</label>
    </interactant>
    <organismsDiffer>false</organismsDiffer>
    <experiments>7</experiments>
</comment>
<comment type="interaction">
    <interactant intactId="EBI-724076">
        <id>Q99750</id>
    </interactant>
    <interactant intactId="EBI-747421">
        <id>Q03014</id>
        <label>HHEX</label>
    </interactant>
    <organismsDiffer>false</organismsDiffer>
    <experiments>3</experiments>
</comment>
<comment type="interaction">
    <interactant intactId="EBI-724076">
        <id>Q99750</id>
    </interactant>
    <interactant intactId="EBI-535849">
        <id>Q8WVV9</id>
        <label>HNRNPLL</label>
    </interactant>
    <organismsDiffer>false</organismsDiffer>
    <experiments>4</experiments>
</comment>
<comment type="interaction">
    <interactant intactId="EBI-724076">
        <id>Q99750</id>
    </interactant>
    <interactant intactId="EBI-740785">
        <id>P49639</id>
        <label>HOXA1</label>
    </interactant>
    <organismsDiffer>false</organismsDiffer>
    <experiments>7</experiments>
</comment>
<comment type="interaction">
    <interactant intactId="EBI-724076">
        <id>Q99750</id>
    </interactant>
    <interactant intactId="EBI-745290">
        <id>P17482</id>
        <label>HOXB9</label>
    </interactant>
    <organismsDiffer>false</organismsDiffer>
    <experiments>6</experiments>
</comment>
<comment type="interaction">
    <interactant intactId="EBI-724076">
        <id>Q99750</id>
    </interactant>
    <interactant intactId="EBI-749311">
        <id>P37235</id>
        <label>HPCAL1</label>
    </interactant>
    <organismsDiffer>false</organismsDiffer>
    <experiments>3</experiments>
</comment>
<comment type="interaction">
    <interactant intactId="EBI-724076">
        <id>Q99750</id>
    </interactant>
    <interactant intactId="EBI-1056863">
        <id>P28222</id>
        <label>HTR1B</label>
    </interactant>
    <organismsDiffer>false</organismsDiffer>
    <experiments>7</experiments>
</comment>
<comment type="interaction">
    <interactant intactId="EBI-724076">
        <id>Q99750</id>
    </interactant>
    <interactant intactId="EBI-2512448">
        <id>Q12894</id>
        <label>IFRD2</label>
    </interactant>
    <organismsDiffer>false</organismsDiffer>
    <experiments>3</experiments>
</comment>
<comment type="interaction">
    <interactant intactId="EBI-724076">
        <id>Q99750</id>
    </interactant>
    <interactant intactId="EBI-10220600">
        <id>Q8NA54</id>
        <label>IQUB</label>
    </interactant>
    <organismsDiffer>false</organismsDiffer>
    <experiments>3</experiments>
</comment>
<comment type="interaction">
    <interactant intactId="EBI-724076">
        <id>Q99750</id>
    </interactant>
    <interactant intactId="EBI-11051601">
        <id>P16144-2</id>
        <label>ITGB4</label>
    </interactant>
    <organismsDiffer>false</organismsDiffer>
    <experiments>3</experiments>
</comment>
<comment type="interaction">
    <interactant intactId="EBI-724076">
        <id>Q99750</id>
    </interactant>
    <interactant intactId="EBI-2510602">
        <id>Q15040</id>
        <label>JOSD1</label>
    </interactant>
    <organismsDiffer>false</organismsDiffer>
    <experiments>3</experiments>
</comment>
<comment type="interaction">
    <interactant intactId="EBI-724076">
        <id>Q99750</id>
    </interactant>
    <interactant intactId="EBI-399080">
        <id>Q92993</id>
        <label>KAT5</label>
    </interactant>
    <organismsDiffer>false</organismsDiffer>
    <experiments>3</experiments>
</comment>
<comment type="interaction">
    <interactant intactId="EBI-724076">
        <id>Q99750</id>
    </interactant>
    <interactant intactId="EBI-11954971">
        <id>Q96MP8-2</id>
        <label>KCTD7</label>
    </interactant>
    <organismsDiffer>false</organismsDiffer>
    <experiments>3</experiments>
</comment>
<comment type="interaction">
    <interactant intactId="EBI-724076">
        <id>Q99750</id>
    </interactant>
    <interactant intactId="EBI-20764875">
        <id>A0A384DVV8</id>
        <label>KIAA0040</label>
    </interactant>
    <organismsDiffer>false</organismsDiffer>
    <experiments>6</experiments>
</comment>
<comment type="interaction">
    <interactant intactId="EBI-724076">
        <id>Q99750</id>
    </interactant>
    <interactant intactId="EBI-6426443">
        <id>Q2WGJ6</id>
        <label>KLHL38</label>
    </interactant>
    <organismsDiffer>false</organismsDiffer>
    <experiments>3</experiments>
</comment>
<comment type="interaction">
    <interactant intactId="EBI-724076">
        <id>Q99750</id>
    </interactant>
    <interactant intactId="EBI-349938">
        <id>P52292</id>
        <label>KPNA2</label>
    </interactant>
    <organismsDiffer>false</organismsDiffer>
    <experiments>3</experiments>
</comment>
<comment type="interaction">
    <interactant intactId="EBI-724076">
        <id>Q99750</id>
    </interactant>
    <interactant intactId="EBI-3045529">
        <id>Q7Z794</id>
        <label>KRT77</label>
    </interactant>
    <organismsDiffer>false</organismsDiffer>
    <experiments>3</experiments>
</comment>
<comment type="interaction">
    <interactant intactId="EBI-724076">
        <id>Q99750</id>
    </interactant>
    <interactant intactId="EBI-16435132">
        <id>A0A0S2Z3Z3</id>
        <label>LAMB3</label>
    </interactant>
    <organismsDiffer>false</organismsDiffer>
    <experiments>3</experiments>
</comment>
<comment type="interaction">
    <interactant intactId="EBI-724076">
        <id>Q99750</id>
    </interactant>
    <interactant intactId="EBI-742828">
        <id>Q14847</id>
        <label>LASP1</label>
    </interactant>
    <organismsDiffer>false</organismsDiffer>
    <experiments>3</experiments>
</comment>
<comment type="interaction">
    <interactant intactId="EBI-724076">
        <id>Q99750</id>
    </interactant>
    <interactant intactId="EBI-9088686">
        <id>Q14847-2</id>
        <label>LASP1</label>
    </interactant>
    <organismsDiffer>false</organismsDiffer>
    <experiments>3</experiments>
</comment>
<comment type="interaction">
    <interactant intactId="EBI-724076">
        <id>Q99750</id>
    </interactant>
    <interactant intactId="EBI-11962058">
        <id>Q5T7P2</id>
        <label>LCE1A</label>
    </interactant>
    <organismsDiffer>false</organismsDiffer>
    <experiments>3</experiments>
</comment>
<comment type="interaction">
    <interactant intactId="EBI-724076">
        <id>Q99750</id>
    </interactant>
    <interactant intactId="EBI-10245913">
        <id>Q5T7P3</id>
        <label>LCE1B</label>
    </interactant>
    <organismsDiffer>false</organismsDiffer>
    <experiments>4</experiments>
</comment>
<comment type="interaction">
    <interactant intactId="EBI-724076">
        <id>Q99750</id>
    </interactant>
    <interactant intactId="EBI-11741311">
        <id>Q5T752</id>
        <label>LCE1D</label>
    </interactant>
    <organismsDiffer>false</organismsDiffer>
    <experiments>3</experiments>
</comment>
<comment type="interaction">
    <interactant intactId="EBI-724076">
        <id>Q99750</id>
    </interactant>
    <interactant intactId="EBI-11958008">
        <id>Q5T754</id>
        <label>LCE1F</label>
    </interactant>
    <organismsDiffer>false</organismsDiffer>
    <experiments>3</experiments>
</comment>
<comment type="interaction">
    <interactant intactId="EBI-724076">
        <id>Q99750</id>
    </interactant>
    <interactant intactId="EBI-11478468">
        <id>O14633</id>
        <label>LCE2B</label>
    </interactant>
    <organismsDiffer>false</organismsDiffer>
    <experiments>3</experiments>
</comment>
<comment type="interaction">
    <interactant intactId="EBI-724076">
        <id>Q99750</id>
    </interactant>
    <interactant intactId="EBI-9394625">
        <id>Q5TA76</id>
        <label>LCE3A</label>
    </interactant>
    <organismsDiffer>false</organismsDiffer>
    <experiments>5</experiments>
</comment>
<comment type="interaction">
    <interactant intactId="EBI-724076">
        <id>Q99750</id>
    </interactant>
    <interactant intactId="EBI-10245291">
        <id>Q5T5A8</id>
        <label>LCE3C</label>
    </interactant>
    <organismsDiffer>false</organismsDiffer>
    <experiments>5</experiments>
</comment>
<comment type="interaction">
    <interactant intactId="EBI-724076">
        <id>Q99750</id>
    </interactant>
    <interactant intactId="EBI-6658837">
        <id>Q9BYE3</id>
        <label>LCE3D</label>
    </interactant>
    <organismsDiffer>false</organismsDiffer>
    <experiments>4</experiments>
</comment>
<comment type="interaction">
    <interactant intactId="EBI-724076">
        <id>Q99750</id>
    </interactant>
    <interactant intactId="EBI-10245456">
        <id>Q5T5B0</id>
        <label>LCE3E</label>
    </interactant>
    <organismsDiffer>false</organismsDiffer>
    <experiments>8</experiments>
</comment>
<comment type="interaction">
    <interactant intactId="EBI-724076">
        <id>Q99750</id>
    </interactant>
    <interactant intactId="EBI-10246358">
        <id>Q5TA78</id>
        <label>LCE4A</label>
    </interactant>
    <organismsDiffer>false</organismsDiffer>
    <experiments>6</experiments>
</comment>
<comment type="interaction">
    <interactant intactId="EBI-724076">
        <id>Q99750</id>
    </interactant>
    <interactant intactId="EBI-10257651">
        <id>Q7Z4I7-5</id>
        <label>LIMS2</label>
    </interactant>
    <organismsDiffer>false</organismsDiffer>
    <experiments>3</experiments>
</comment>
<comment type="interaction">
    <interactant intactId="EBI-724076">
        <id>Q99750</id>
    </interactant>
    <interactant intactId="EBI-2513988">
        <id>O14910</id>
        <label>LIN7A</label>
    </interactant>
    <organismsDiffer>false</organismsDiffer>
    <experiments>3</experiments>
</comment>
<comment type="interaction">
    <interactant intactId="EBI-724076">
        <id>Q99750</id>
    </interactant>
    <interactant intactId="EBI-718707">
        <id>O75427</id>
        <label>LRCH4</label>
    </interactant>
    <organismsDiffer>false</organismsDiffer>
    <experiments>3</experiments>
</comment>
<comment type="interaction">
    <interactant intactId="EBI-724076">
        <id>Q99750</id>
    </interactant>
    <interactant intactId="EBI-10694180">
        <id>Q8TD91-2</id>
        <label>MAGEC3</label>
    </interactant>
    <organismsDiffer>false</organismsDiffer>
    <experiments>3</experiments>
</comment>
<comment type="interaction">
    <interactant intactId="EBI-724076">
        <id>Q99750</id>
    </interactant>
    <interactant intactId="EBI-716006">
        <id>Q9Y5V3</id>
        <label>MAGED1</label>
    </interactant>
    <organismsDiffer>false</organismsDiffer>
    <experiments>6</experiments>
</comment>
<comment type="interaction">
    <interactant intactId="EBI-724076">
        <id>Q99750</id>
    </interactant>
    <interactant intactId="EBI-5525855">
        <id>Q9HAY2</id>
        <label>MAGEF1</label>
    </interactant>
    <organismsDiffer>false</organismsDiffer>
    <experiments>4</experiments>
</comment>
<comment type="interaction">
    <interactant intactId="EBI-724076">
        <id>Q99750</id>
    </interactant>
    <interactant intactId="EBI-959949">
        <id>P28482</id>
        <label>MAPK1</label>
    </interactant>
    <organismsDiffer>false</organismsDiffer>
    <experiments>3</experiments>
</comment>
<comment type="interaction">
    <interactant intactId="EBI-724076">
        <id>Q99750</id>
    </interactant>
    <interactant intactId="EBI-947402">
        <id>O60336</id>
        <label>MAPKBP1</label>
    </interactant>
    <organismsDiffer>false</organismsDiffer>
    <experiments>6</experiments>
</comment>
<comment type="interaction">
    <interactant intactId="EBI-724076">
        <id>Q99750</id>
    </interactant>
    <interactant intactId="EBI-11989378">
        <id>Q8NHZ7</id>
        <label>MBD3L2</label>
    </interactant>
    <organismsDiffer>false</organismsDiffer>
    <experiments>3</experiments>
</comment>
<comment type="interaction">
    <interactant intactId="EBI-724076">
        <id>Q99750</id>
    </interactant>
    <interactant intactId="EBI-724076">
        <id>Q99750</id>
        <label>MDFI</label>
    </interactant>
    <organismsDiffer>false</organismsDiffer>
    <experiments>4</experiments>
</comment>
<comment type="interaction">
    <interactant intactId="EBI-724076">
        <id>Q99750</id>
    </interactant>
    <interactant intactId="EBI-749353">
        <id>Q9H7H0</id>
        <label>METTL17</label>
    </interactant>
    <organismsDiffer>false</organismsDiffer>
    <experiments>5</experiments>
</comment>
<comment type="interaction">
    <interactant intactId="EBI-724076">
        <id>Q99750</id>
    </interactant>
    <interactant intactId="EBI-11098807">
        <id>Q9H7H0-2</id>
        <label>METTL17</label>
    </interactant>
    <organismsDiffer>false</organismsDiffer>
    <experiments>6</experiments>
</comment>
<comment type="interaction">
    <interactant intactId="EBI-724076">
        <id>Q99750</id>
    </interactant>
    <interactant intactId="EBI-14086479">
        <id>Q8IVT4</id>
        <label>MGC50722</label>
    </interactant>
    <organismsDiffer>false</organismsDiffer>
    <experiments>3</experiments>
</comment>
<comment type="interaction">
    <interactant intactId="EBI-724076">
        <id>Q99750</id>
    </interactant>
    <interactant intactId="EBI-10211940">
        <id>P50539-3</id>
        <label>MXI1</label>
    </interactant>
    <organismsDiffer>false</organismsDiffer>
    <experiments>3</experiments>
</comment>
<comment type="interaction">
    <interactant intactId="EBI-724076">
        <id>Q99750</id>
    </interactant>
    <interactant intactId="EBI-2858213">
        <id>Q86VE0</id>
        <label>MYPOP</label>
    </interactant>
    <organismsDiffer>false</organismsDiffer>
    <experiments>3</experiments>
</comment>
<comment type="interaction">
    <interactant intactId="EBI-724076">
        <id>Q99750</id>
    </interactant>
    <interactant intactId="EBI-718419">
        <id>Q92692</id>
        <label>NECTIN2</label>
    </interactant>
    <organismsDiffer>false</organismsDiffer>
    <experiments>4</experiments>
</comment>
<comment type="interaction">
    <interactant intactId="EBI-724076">
        <id>Q99750</id>
    </interactant>
    <interactant intactId="EBI-6979889">
        <id>Q92692-2</id>
        <label>NECTIN2</label>
    </interactant>
    <organismsDiffer>false</organismsDiffer>
    <experiments>3</experiments>
</comment>
<comment type="interaction">
    <interactant intactId="EBI-724076">
        <id>Q99750</id>
    </interactant>
    <interactant intactId="EBI-746964">
        <id>Q8WWR8</id>
        <label>NEU4</label>
    </interactant>
    <organismsDiffer>false</organismsDiffer>
    <experiments>4</experiments>
</comment>
<comment type="interaction">
    <interactant intactId="EBI-724076">
        <id>Q99750</id>
    </interactant>
    <interactant intactId="EBI-2796690">
        <id>Q86XR2</id>
        <label>NIBAN3</label>
    </interactant>
    <organismsDiffer>false</organismsDiffer>
    <experiments>3</experiments>
</comment>
<comment type="interaction">
    <interactant intactId="EBI-724076">
        <id>Q99750</id>
    </interactant>
    <interactant intactId="EBI-1538217">
        <id>Q969G9</id>
        <label>NKD1</label>
    </interactant>
    <organismsDiffer>false</organismsDiffer>
    <experiments>3</experiments>
</comment>
<comment type="interaction">
    <interactant intactId="EBI-724076">
        <id>Q99750</id>
    </interactant>
    <interactant intactId="EBI-748927">
        <id>Q9NQX5</id>
        <label>NPDC1</label>
    </interactant>
    <organismsDiffer>false</organismsDiffer>
    <experiments>8</experiments>
</comment>
<comment type="interaction">
    <interactant intactId="EBI-724076">
        <id>Q99750</id>
    </interactant>
    <interactant intactId="EBI-12329915">
        <id>Q8NDH3-5</id>
        <label>NPEPL1</label>
    </interactant>
    <organismsDiffer>false</organismsDiffer>
    <experiments>3</experiments>
</comment>
<comment type="interaction">
    <interactant intactId="EBI-724076">
        <id>Q99750</id>
    </interactant>
    <interactant intactId="EBI-10177172">
        <id>F1D8P7</id>
        <label>NR1H2</label>
    </interactant>
    <organismsDiffer>false</organismsDiffer>
    <experiments>6</experiments>
</comment>
<comment type="interaction">
    <interactant intactId="EBI-724076">
        <id>Q99750</id>
    </interactant>
    <interactant intactId="EBI-745354">
        <id>P55055</id>
        <label>NR1H2</label>
    </interactant>
    <organismsDiffer>false</organismsDiffer>
    <experiments>3</experiments>
</comment>
<comment type="interaction">
    <interactant intactId="EBI-724076">
        <id>Q99750</id>
    </interactant>
    <interactant intactId="EBI-781356">
        <id>Q13133</id>
        <label>NR1H3</label>
    </interactant>
    <organismsDiffer>false</organismsDiffer>
    <experiments>3</experiments>
</comment>
<comment type="interaction">
    <interactant intactId="EBI-724076">
        <id>Q99750</id>
    </interactant>
    <interactant intactId="EBI-12699353">
        <id>Q13133-2</id>
        <label>NR1H3</label>
    </interactant>
    <organismsDiffer>false</organismsDiffer>
    <experiments>3</experiments>
</comment>
<comment type="interaction">
    <interactant intactId="EBI-724076">
        <id>Q99750</id>
    </interactant>
    <interactant intactId="EBI-11952806">
        <id>Q13133-3</id>
        <label>NR1H3</label>
    </interactant>
    <organismsDiffer>false</organismsDiffer>
    <experiments>3</experiments>
</comment>
<comment type="interaction">
    <interactant intactId="EBI-724076">
        <id>Q99750</id>
    </interactant>
    <interactant intactId="EBI-11110981">
        <id>Q96L73-2</id>
        <label>NSD1</label>
    </interactant>
    <organismsDiffer>false</organismsDiffer>
    <experiments>3</experiments>
</comment>
<comment type="interaction">
    <interactant intactId="EBI-724076">
        <id>Q99750</id>
    </interactant>
    <interactant intactId="EBI-1048886">
        <id>Q9Y5Y2</id>
        <label>NUBP2</label>
    </interactant>
    <organismsDiffer>false</organismsDiffer>
    <experiments>3</experiments>
</comment>
<comment type="interaction">
    <interactant intactId="EBI-724076">
        <id>Q99750</id>
    </interactant>
    <interactant intactId="EBI-1210753">
        <id>Q7Z417</id>
        <label>NUFIP2</label>
    </interactant>
    <organismsDiffer>false</organismsDiffer>
    <experiments>4</experiments>
</comment>
<comment type="interaction">
    <interactant intactId="EBI-724076">
        <id>Q99750</id>
    </interactant>
    <interactant intactId="EBI-10239029">
        <id>Q17RF5</id>
        <label>ODAPH</label>
    </interactant>
    <organismsDiffer>false</organismsDiffer>
    <experiments>6</experiments>
</comment>
<comment type="interaction">
    <interactant intactId="EBI-724076">
        <id>Q99750</id>
    </interactant>
    <interactant intactId="EBI-10234557">
        <id>Q14990</id>
        <label>ODF1</label>
    </interactant>
    <organismsDiffer>false</organismsDiffer>
    <experiments>3</experiments>
</comment>
<comment type="interaction">
    <interactant intactId="EBI-724076">
        <id>Q99750</id>
    </interactant>
    <interactant intactId="EBI-10225049">
        <id>Q7RTU3</id>
        <label>OLIG3</label>
    </interactant>
    <organismsDiffer>false</organismsDiffer>
    <experiments>6</experiments>
</comment>
<comment type="interaction">
    <interactant intactId="EBI-724076">
        <id>Q99750</id>
    </interactant>
    <interactant intactId="EBI-740446">
        <id>P32242</id>
        <label>OTX1</label>
    </interactant>
    <organismsDiffer>false</organismsDiffer>
    <experiments>9</experiments>
</comment>
<comment type="interaction">
    <interactant intactId="EBI-724076">
        <id>Q99750</id>
    </interactant>
    <interactant intactId="EBI-11022007">
        <id>Q9HBE1-4</id>
        <label>PATZ1</label>
    </interactant>
    <organismsDiffer>false</organismsDiffer>
    <experiments>3</experiments>
</comment>
<comment type="interaction">
    <interactant intactId="EBI-724076">
        <id>Q99750</id>
    </interactant>
    <interactant intactId="EBI-740845">
        <id>Q96AQ6</id>
        <label>PBXIP1</label>
    </interactant>
    <organismsDiffer>false</organismsDiffer>
    <experiments>4</experiments>
</comment>
<comment type="interaction">
    <interactant intactId="EBI-724076">
        <id>Q99750</id>
    </interactant>
    <interactant intactId="EBI-11956269">
        <id>Q92824-2</id>
        <label>PCSK5</label>
    </interactant>
    <organismsDiffer>false</organismsDiffer>
    <experiments>3</experiments>
</comment>
<comment type="interaction">
    <interactant intactId="EBI-724076">
        <id>Q99750</id>
    </interactant>
    <interactant intactId="EBI-11995148">
        <id>P04085-2</id>
        <label>PDGFA</label>
    </interactant>
    <organismsDiffer>false</organismsDiffer>
    <experiments>3</experiments>
</comment>
<comment type="interaction">
    <interactant intactId="EBI-724076">
        <id>Q99750</id>
    </interactant>
    <interactant intactId="EBI-953879">
        <id>Q14554</id>
        <label>PDIA5</label>
    </interactant>
    <organismsDiffer>false</organismsDiffer>
    <experiments>3</experiments>
</comment>
<comment type="interaction">
    <interactant intactId="EBI-724076">
        <id>Q99750</id>
    </interactant>
    <interactant intactId="EBI-12067280">
        <id>Q29RF7-3</id>
        <label>PDS5A</label>
    </interactant>
    <organismsDiffer>false</organismsDiffer>
    <experiments>3</experiments>
</comment>
<comment type="interaction">
    <interactant intactId="EBI-724076">
        <id>Q99750</id>
    </interactant>
    <interactant intactId="EBI-448407">
        <id>Q9HAT8</id>
        <label>PELI2</label>
    </interactant>
    <organismsDiffer>false</organismsDiffer>
    <experiments>3</experiments>
</comment>
<comment type="interaction">
    <interactant intactId="EBI-724076">
        <id>Q99750</id>
    </interactant>
    <interactant intactId="EBI-530034">
        <id>O43189</id>
        <label>PHF1</label>
    </interactant>
    <organismsDiffer>false</organismsDiffer>
    <experiments>3</experiments>
</comment>
<comment type="interaction">
    <interactant intactId="EBI-724076">
        <id>Q99750</id>
    </interactant>
    <interactant intactId="EBI-14084211">
        <id>A2BDE7</id>
        <label>PHLDA1</label>
    </interactant>
    <organismsDiffer>false</organismsDiffer>
    <experiments>3</experiments>
</comment>
<comment type="interaction">
    <interactant intactId="EBI-724076">
        <id>Q99750</id>
    </interactant>
    <interactant intactId="EBI-738731">
        <id>Q8WV24</id>
        <label>PHLDA1</label>
    </interactant>
    <organismsDiffer>false</organismsDiffer>
    <experiments>3</experiments>
</comment>
<comment type="interaction">
    <interactant intactId="EBI-724076">
        <id>Q99750</id>
    </interactant>
    <interactant intactId="EBI-14066006">
        <id>Q4G0R1</id>
        <label>PIBF1</label>
    </interactant>
    <organismsDiffer>false</organismsDiffer>
    <experiments>3</experiments>
</comment>
<comment type="interaction">
    <interactant intactId="EBI-724076">
        <id>Q99750</id>
    </interactant>
    <interactant intactId="EBI-10256685">
        <id>Q7Z2X4</id>
        <label>PID1</label>
    </interactant>
    <organismsDiffer>false</organismsDiffer>
    <experiments>3</experiments>
</comment>
<comment type="interaction">
    <interactant intactId="EBI-724076">
        <id>Q99750</id>
    </interactant>
    <interactant intactId="EBI-520427">
        <id>Q9HB75</id>
        <label>PIDD1</label>
    </interactant>
    <organismsDiffer>false</organismsDiffer>
    <experiments>3</experiments>
</comment>
<comment type="interaction">
    <interactant intactId="EBI-724076">
        <id>Q99750</id>
    </interactant>
    <interactant intactId="EBI-10232538">
        <id>Q8WWB5</id>
        <label>PIH1D2</label>
    </interactant>
    <organismsDiffer>false</organismsDiffer>
    <experiments>6</experiments>
</comment>
<comment type="interaction">
    <interactant intactId="EBI-724076">
        <id>Q99750</id>
    </interactant>
    <interactant intactId="EBI-714158">
        <id>Q13526</id>
        <label>PIN1</label>
    </interactant>
    <organismsDiffer>false</organismsDiffer>
    <experiments>7</experiments>
</comment>
<comment type="interaction">
    <interactant intactId="EBI-724076">
        <id>Q99750</id>
    </interactant>
    <interactant intactId="EBI-748265">
        <id>P78337</id>
        <label>PITX1</label>
    </interactant>
    <organismsDiffer>false</organismsDiffer>
    <experiments>3</experiments>
</comment>
<comment type="interaction">
    <interactant intactId="EBI-724076">
        <id>Q99750</id>
    </interactant>
    <interactant intactId="EBI-7813714">
        <id>Q13563</id>
        <label>PKD2</label>
    </interactant>
    <organismsDiffer>false</organismsDiffer>
    <experiments>3</experiments>
</comment>
<comment type="interaction">
    <interactant intactId="EBI-724076">
        <id>Q99750</id>
    </interactant>
    <interactant intactId="EBI-949255">
        <id>Q58EX7</id>
        <label>PLEKHG4</label>
    </interactant>
    <organismsDiffer>false</organismsDiffer>
    <experiments>3</experiments>
</comment>
<comment type="interaction">
    <interactant intactId="EBI-724076">
        <id>Q99750</id>
    </interactant>
    <interactant intactId="EBI-10320765">
        <id>Q9UGP5-2</id>
        <label>POLL</label>
    </interactant>
    <organismsDiffer>false</organismsDiffer>
    <experiments>3</experiments>
</comment>
<comment type="interaction">
    <interactant intactId="EBI-724076">
        <id>Q99750</id>
    </interactant>
    <interactant intactId="EBI-1053424">
        <id>O43741</id>
        <label>PRKAB2</label>
    </interactant>
    <organismsDiffer>false</organismsDiffer>
    <experiments>12</experiments>
</comment>
<comment type="interaction">
    <interactant intactId="EBI-724076">
        <id>Q99750</id>
    </interactant>
    <interactant intactId="EBI-2798416">
        <id>Q99633</id>
        <label>PRPF18</label>
    </interactant>
    <organismsDiffer>false</organismsDiffer>
    <experiments>3</experiments>
</comment>
<comment type="interaction">
    <interactant intactId="EBI-724076">
        <id>Q99750</id>
    </interactant>
    <interactant intactId="EBI-1567797">
        <id>Q8WWY3</id>
        <label>PRPF31</label>
    </interactant>
    <organismsDiffer>false</organismsDiffer>
    <experiments>5</experiments>
</comment>
<comment type="interaction">
    <interactant intactId="EBI-724076">
        <id>Q99750</id>
    </interactant>
    <interactant intactId="EBI-11959565">
        <id>Q9NV39</id>
        <label>PRR34</label>
    </interactant>
    <organismsDiffer>false</organismsDiffer>
    <experiments>3</experiments>
</comment>
<comment type="interaction">
    <interactant intactId="EBI-724076">
        <id>Q99750</id>
    </interactant>
    <interactant intactId="EBI-2803245">
        <id>Q13308</id>
        <label>PTK7</label>
    </interactant>
    <organismsDiffer>false</organismsDiffer>
    <experiments>3</experiments>
</comment>
<comment type="interaction">
    <interactant intactId="EBI-724076">
        <id>Q99750</id>
    </interactant>
    <interactant intactId="EBI-7199479">
        <id>Q8WUK0</id>
        <label>PTPMT1</label>
    </interactant>
    <organismsDiffer>false</organismsDiffer>
    <experiments>7</experiments>
</comment>
<comment type="interaction">
    <interactant intactId="EBI-724076">
        <id>Q99750</id>
    </interactant>
    <interactant intactId="EBI-742029">
        <id>Q3YEC7</id>
        <label>RABL6</label>
    </interactant>
    <organismsDiffer>false</organismsDiffer>
    <experiments>2</experiments>
</comment>
<comment type="interaction">
    <interactant intactId="EBI-724076">
        <id>Q99750</id>
    </interactant>
    <interactant intactId="EBI-413628">
        <id>P63000</id>
        <label>RAC1</label>
    </interactant>
    <organismsDiffer>false</organismsDiffer>
    <experiments>3</experiments>
</comment>
<comment type="interaction">
    <interactant intactId="EBI-724076">
        <id>Q99750</id>
    </interactant>
    <interactant intactId="EBI-740818">
        <id>Q9Y272</id>
        <label>RASD1</label>
    </interactant>
    <organismsDiffer>false</organismsDiffer>
    <experiments>5</experiments>
</comment>
<comment type="interaction">
    <interactant intactId="EBI-724076">
        <id>Q99750</id>
    </interactant>
    <interactant intactId="EBI-10223932">
        <id>Q06141</id>
        <label>REG3A</label>
    </interactant>
    <organismsDiffer>false</organismsDiffer>
    <experiments>3</experiments>
</comment>
<comment type="interaction">
    <interactant intactId="EBI-724076">
        <id>Q99750</id>
    </interactant>
    <interactant intactId="EBI-745810">
        <id>Q96EN9</id>
        <label>REX1BD</label>
    </interactant>
    <organismsDiffer>false</organismsDiffer>
    <experiments>6</experiments>
</comment>
<comment type="interaction">
    <interactant intactId="EBI-724076">
        <id>Q99750</id>
    </interactant>
    <interactant intactId="EBI-372094">
        <id>Q9BQY4</id>
        <label>RHOXF2</label>
    </interactant>
    <organismsDiffer>false</organismsDiffer>
    <experiments>3</experiments>
</comment>
<comment type="interaction">
    <interactant intactId="EBI-724076">
        <id>Q99750</id>
    </interactant>
    <interactant intactId="EBI-366017">
        <id>Q13671</id>
        <label>RIN1</label>
    </interactant>
    <organismsDiffer>false</organismsDiffer>
    <experiments>3</experiments>
</comment>
<comment type="interaction">
    <interactant intactId="EBI-724076">
        <id>Q99750</id>
    </interactant>
    <interactant intactId="EBI-10226430">
        <id>Q0D2K3</id>
        <label>RIPPLY1</label>
    </interactant>
    <organismsDiffer>false</organismsDiffer>
    <experiments>6</experiments>
</comment>
<comment type="interaction">
    <interactant intactId="EBI-724076">
        <id>Q99750</id>
    </interactant>
    <interactant intactId="EBI-16428950">
        <id>A0A0S2Z4G9</id>
        <label>RNF6</label>
    </interactant>
    <organismsDiffer>false</organismsDiffer>
    <experiments>3</experiments>
</comment>
<comment type="interaction">
    <interactant intactId="EBI-724076">
        <id>Q99750</id>
    </interactant>
    <interactant intactId="EBI-10217913">
        <id>Q14D33</id>
        <label>RTP5</label>
    </interactant>
    <organismsDiffer>false</organismsDiffer>
    <experiments>6</experiments>
</comment>
<comment type="interaction">
    <interactant intactId="EBI-724076">
        <id>Q99750</id>
    </interactant>
    <interactant intactId="EBI-2561646">
        <id>Q86UD0</id>
        <label>SAPCD2</label>
    </interactant>
    <organismsDiffer>false</organismsDiffer>
    <experiments>3</experiments>
</comment>
<comment type="interaction">
    <interactant intactId="EBI-724076">
        <id>Q99750</id>
    </interactant>
    <interactant intactId="EBI-4403649">
        <id>Q969E2</id>
        <label>SCAMP4</label>
    </interactant>
    <organismsDiffer>false</organismsDiffer>
    <experiments>3</experiments>
</comment>
<comment type="interaction">
    <interactant intactId="EBI-724076">
        <id>Q99750</id>
    </interactant>
    <interactant intactId="EBI-748391">
        <id>Q9BWG6</id>
        <label>SCNM1</label>
    </interactant>
    <organismsDiffer>false</organismsDiffer>
    <experiments>3</experiments>
</comment>
<comment type="interaction">
    <interactant intactId="EBI-724076">
        <id>Q99750</id>
    </interactant>
    <interactant intactId="EBI-10277687">
        <id>Q8WWX9</id>
        <label>SELENOM</label>
    </interactant>
    <organismsDiffer>false</organismsDiffer>
    <experiments>3</experiments>
</comment>
<comment type="interaction">
    <interactant intactId="EBI-724076">
        <id>Q99750</id>
    </interactant>
    <interactant intactId="EBI-11017428">
        <id>Q13214-2</id>
        <label>SEMA3B</label>
    </interactant>
    <organismsDiffer>false</organismsDiffer>
    <experiments>3</experiments>
</comment>
<comment type="interaction">
    <interactant intactId="EBI-724076">
        <id>Q99750</id>
    </interactant>
    <interactant intactId="EBI-10313866">
        <id>Q9NUL5</id>
        <label>SHFL</label>
    </interactant>
    <organismsDiffer>false</organismsDiffer>
    <experiments>3</experiments>
</comment>
<comment type="interaction">
    <interactant intactId="EBI-724076">
        <id>Q99750</id>
    </interactant>
    <interactant intactId="EBI-11955083">
        <id>Q9NUL5-4</id>
        <label>SHFL</label>
    </interactant>
    <organismsDiffer>false</organismsDiffer>
    <experiments>3</experiments>
</comment>
<comment type="interaction">
    <interactant intactId="EBI-724076">
        <id>Q99750</id>
    </interactant>
    <interactant intactId="EBI-715117">
        <id>P34896</id>
        <label>SHMT1</label>
    </interactant>
    <organismsDiffer>false</organismsDiffer>
    <experiments>3</experiments>
</comment>
<comment type="interaction">
    <interactant intactId="EBI-724076">
        <id>Q99750</id>
    </interactant>
    <interactant intactId="EBI-743675">
        <id>Q15475</id>
        <label>SIX1</label>
    </interactant>
    <organismsDiffer>false</organismsDiffer>
    <experiments>2</experiments>
</comment>
<comment type="interaction">
    <interactant intactId="EBI-724076">
        <id>Q99750</id>
    </interactant>
    <interactant intactId="EBI-12002412">
        <id>Q86YT5</id>
        <label>SLC13A5</label>
    </interactant>
    <organismsDiffer>false</organismsDiffer>
    <experiments>3</experiments>
</comment>
<comment type="interaction">
    <interactant intactId="EBI-724076">
        <id>Q99750</id>
    </interactant>
    <interactant intactId="EBI-12179023">
        <id>Q8IY34</id>
        <label>SLC15A3</label>
    </interactant>
    <organismsDiffer>false</organismsDiffer>
    <experiments>3</experiments>
</comment>
<comment type="interaction">
    <interactant intactId="EBI-724076">
        <id>Q99750</id>
    </interactant>
    <interactant intactId="EBI-750394">
        <id>Q9UBX3</id>
        <label>SLC25A10</label>
    </interactant>
    <organismsDiffer>false</organismsDiffer>
    <experiments>7</experiments>
</comment>
<comment type="interaction">
    <interactant intactId="EBI-724076">
        <id>Q99750</id>
    </interactant>
    <interactant intactId="EBI-12056597">
        <id>Q9UBX3-2</id>
        <label>SLC25A10</label>
    </interactant>
    <organismsDiffer>false</organismsDiffer>
    <experiments>3</experiments>
</comment>
<comment type="interaction">
    <interactant intactId="EBI-724076">
        <id>Q99750</id>
    </interactant>
    <interactant intactId="EBI-8463848">
        <id>Q8NB12</id>
        <label>SMYD1</label>
    </interactant>
    <organismsDiffer>false</organismsDiffer>
    <experiments>3</experiments>
</comment>
<comment type="interaction">
    <interactant intactId="EBI-724076">
        <id>Q99750</id>
    </interactant>
    <interactant intactId="EBI-298169">
        <id>Q96RF0</id>
        <label>SNX18</label>
    </interactant>
    <organismsDiffer>false</organismsDiffer>
    <experiments>3</experiments>
</comment>
<comment type="interaction">
    <interactant intactId="EBI-724076">
        <id>Q99750</id>
    </interactant>
    <interactant intactId="EBI-1539606">
        <id>O14512</id>
        <label>SOCS7</label>
    </interactant>
    <organismsDiffer>false</organismsDiffer>
    <experiments>3</experiments>
</comment>
<comment type="interaction">
    <interactant intactId="EBI-724076">
        <id>Q99750</id>
    </interactant>
    <interactant intactId="EBI-12041693">
        <id>Q86W54-2</id>
        <label>SPATA24</label>
    </interactant>
    <organismsDiffer>false</organismsDiffer>
    <experiments>3</experiments>
</comment>
<comment type="interaction">
    <interactant intactId="EBI-724076">
        <id>Q99750</id>
    </interactant>
    <interactant intactId="EBI-8635958">
        <id>Q6RVD6</id>
        <label>SPATA8</label>
    </interactant>
    <organismsDiffer>false</organismsDiffer>
    <experiments>6</experiments>
</comment>
<comment type="interaction">
    <interactant intactId="EBI-724076">
        <id>Q99750</id>
    </interactant>
    <interactant intactId="EBI-717201">
        <id>Q9UQ90</id>
        <label>SPG7</label>
    </interactant>
    <organismsDiffer>false</organismsDiffer>
    <experiments>7</experiments>
</comment>
<comment type="interaction">
    <interactant intactId="EBI-724076">
        <id>Q99750</id>
    </interactant>
    <interactant intactId="EBI-751020">
        <id>Q9P2T0</id>
        <label>SPMAP2</label>
    </interactant>
    <organismsDiffer>false</organismsDiffer>
    <experiments>3</experiments>
</comment>
<comment type="interaction">
    <interactant intactId="EBI-724076">
        <id>Q99750</id>
    </interactant>
    <interactant intactId="EBI-12020542">
        <id>Q96LM5</id>
        <label>SPMIP2</label>
    </interactant>
    <organismsDiffer>false</organismsDiffer>
    <experiments>3</experiments>
</comment>
<comment type="interaction">
    <interactant intactId="EBI-724076">
        <id>Q99750</id>
    </interactant>
    <interactant intactId="EBI-2431846">
        <id>Q9HCB6</id>
        <label>SPON1</label>
    </interactant>
    <organismsDiffer>false</organismsDiffer>
    <experiments>3</experiments>
</comment>
<comment type="interaction">
    <interactant intactId="EBI-724076">
        <id>Q99750</id>
    </interactant>
    <interactant intactId="EBI-7082156">
        <id>Q7Z698</id>
        <label>SPRED2</label>
    </interactant>
    <organismsDiffer>false</organismsDiffer>
    <experiments>3</experiments>
</comment>
<comment type="interaction">
    <interactant intactId="EBI-724076">
        <id>Q99750</id>
    </interactant>
    <interactant intactId="EBI-3866665">
        <id>O43609</id>
        <label>SPRY1</label>
    </interactant>
    <organismsDiffer>false</organismsDiffer>
    <experiments>7</experiments>
</comment>
<comment type="interaction">
    <interactant intactId="EBI-724076">
        <id>Q99750</id>
    </interactant>
    <interactant intactId="EBI-742487">
        <id>O43597</id>
        <label>SPRY2</label>
    </interactant>
    <organismsDiffer>false</organismsDiffer>
    <experiments>3</experiments>
</comment>
<comment type="interaction">
    <interactant intactId="EBI-724076">
        <id>Q99750</id>
    </interactant>
    <interactant intactId="EBI-3921347">
        <id>P51687</id>
        <label>SUOX</label>
    </interactant>
    <organismsDiffer>false</organismsDiffer>
    <experiments>3</experiments>
</comment>
<comment type="interaction">
    <interactant intactId="EBI-724076">
        <id>Q99750</id>
    </interactant>
    <interactant intactId="EBI-747797">
        <id>Q9BSH4</id>
        <label>TACO1</label>
    </interactant>
    <organismsDiffer>false</organismsDiffer>
    <experiments>3</experiments>
</comment>
<comment type="interaction">
    <interactant intactId="EBI-724076">
        <id>Q99750</id>
    </interactant>
    <interactant intactId="EBI-745958">
        <id>Q5VWN6</id>
        <label>TASOR2</label>
    </interactant>
    <organismsDiffer>false</organismsDiffer>
    <experiments>3</experiments>
</comment>
<comment type="interaction">
    <interactant intactId="EBI-724076">
        <id>Q99750</id>
    </interactant>
    <interactant intactId="EBI-13092532">
        <id>Q6DHY5</id>
        <label>TBC1D3G</label>
    </interactant>
    <organismsDiffer>false</organismsDiffer>
    <experiments>3</experiments>
</comment>
<comment type="interaction">
    <interactant intactId="EBI-724076">
        <id>Q99750</id>
    </interactant>
    <interactant intactId="EBI-11955057">
        <id>Q8N8B7-2</id>
        <label>TCEANC</label>
    </interactant>
    <organismsDiffer>false</organismsDiffer>
    <experiments>3</experiments>
</comment>
<comment type="interaction">
    <interactant intactId="EBI-724076">
        <id>Q99750</id>
    </interactant>
    <interactant intactId="EBI-16432288">
        <id>A0A0S2Z4E5</id>
        <label>TEAD4</label>
    </interactant>
    <organismsDiffer>false</organismsDiffer>
    <experiments>3</experiments>
</comment>
<comment type="interaction">
    <interactant intactId="EBI-724076">
        <id>Q99750</id>
    </interactant>
    <interactant intactId="EBI-16429215">
        <id>A0A0S2Z4F2</id>
        <label>TEAD4</label>
    </interactant>
    <organismsDiffer>false</organismsDiffer>
    <experiments>3</experiments>
</comment>
<comment type="interaction">
    <interactant intactId="EBI-724076">
        <id>Q99750</id>
    </interactant>
    <interactant intactId="EBI-8465456">
        <id>Q7L2K0</id>
        <label>TEDC2</label>
    </interactant>
    <organismsDiffer>false</organismsDiffer>
    <experiments>3</experiments>
</comment>
<comment type="interaction">
    <interactant intactId="EBI-724076">
        <id>Q99750</id>
    </interactant>
    <interactant intactId="EBI-714215">
        <id>Q15583</id>
        <label>TGIF1</label>
    </interactant>
    <organismsDiffer>false</organismsDiffer>
    <experiments>4</experiments>
</comment>
<comment type="interaction">
    <interactant intactId="EBI-724076">
        <id>Q99750</id>
    </interactant>
    <interactant intactId="EBI-12001016">
        <id>P07101-3</id>
        <label>TH</label>
    </interactant>
    <organismsDiffer>false</organismsDiffer>
    <experiments>3</experiments>
</comment>
<comment type="interaction">
    <interactant intactId="EBI-724076">
        <id>Q99750</id>
    </interactant>
    <interactant intactId="EBI-11741437">
        <id>Q08117-2</id>
        <label>TLE5</label>
    </interactant>
    <organismsDiffer>false</organismsDiffer>
    <experiments>3</experiments>
</comment>
<comment type="interaction">
    <interactant intactId="EBI-724076">
        <id>Q99750</id>
    </interactant>
    <interactant intactId="EBI-746692">
        <id>P19237</id>
        <label>TNNI1</label>
    </interactant>
    <organismsDiffer>false</organismsDiffer>
    <experiments>3</experiments>
</comment>
<comment type="interaction">
    <interactant intactId="EBI-724076">
        <id>Q99750</id>
    </interactant>
    <interactant intactId="EBI-12039775">
        <id>Q05952</id>
        <label>TNP2</label>
    </interactant>
    <organismsDiffer>false</organismsDiffer>
    <experiments>4</experiments>
</comment>
<comment type="interaction">
    <interactant intactId="EBI-724076">
        <id>Q99750</id>
    </interactant>
    <interactant intactId="EBI-10241829">
        <id>Q4VB56</id>
        <label>TNP2</label>
    </interactant>
    <organismsDiffer>false</organismsDiffer>
    <experiments>3</experiments>
</comment>
<comment type="interaction">
    <interactant intactId="EBI-724076">
        <id>Q99750</id>
    </interactant>
    <interactant intactId="EBI-524257">
        <id>O14656</id>
        <label>TOR1A</label>
    </interactant>
    <organismsDiffer>false</organismsDiffer>
    <experiments>3</experiments>
</comment>
<comment type="interaction">
    <interactant intactId="EBI-724076">
        <id>Q99750</id>
    </interactant>
    <interactant intactId="EBI-492476">
        <id>Q96RU7</id>
        <label>TRIB3</label>
    </interactant>
    <organismsDiffer>false</organismsDiffer>
    <experiments>3</experiments>
</comment>
<comment type="interaction">
    <interactant intactId="EBI-724076">
        <id>Q99750</id>
    </interactant>
    <interactant intactId="EBI-1049298">
        <id>P43897</id>
        <label>TSFM</label>
    </interactant>
    <organismsDiffer>false</organismsDiffer>
    <experiments>3</experiments>
</comment>
<comment type="interaction">
    <interactant intactId="EBI-724076">
        <id>Q99750</id>
    </interactant>
    <interactant intactId="EBI-10241197">
        <id>Q3SY00</id>
        <label>TSGA10IP</label>
    </interactant>
    <organismsDiffer>false</organismsDiffer>
    <experiments>3</experiments>
</comment>
<comment type="interaction">
    <interactant intactId="EBI-724076">
        <id>Q99750</id>
    </interactant>
    <interactant intactId="EBI-8652667">
        <id>O14817</id>
        <label>TSPAN4</label>
    </interactant>
    <organismsDiffer>false</organismsDiffer>
    <experiments>3</experiments>
</comment>
<comment type="interaction">
    <interactant intactId="EBI-724076">
        <id>Q99750</id>
    </interactant>
    <interactant intactId="EBI-723389">
        <id>Q6FI91</id>
        <label>TSPYL</label>
    </interactant>
    <organismsDiffer>false</organismsDiffer>
    <experiments>3</experiments>
</comment>
<comment type="interaction">
    <interactant intactId="EBI-724076">
        <id>Q99750</id>
    </interactant>
    <interactant intactId="EBI-12023322">
        <id>Q8N831</id>
        <label>TSPYL6</label>
    </interactant>
    <organismsDiffer>false</organismsDiffer>
    <experiments>3</experiments>
</comment>
<comment type="interaction">
    <interactant intactId="EBI-724076">
        <id>Q99750</id>
    </interactant>
    <interactant intactId="EBI-6447954">
        <id>Q5W5X9</id>
        <label>TTC23</label>
    </interactant>
    <organismsDiffer>false</organismsDiffer>
    <experiments>3</experiments>
</comment>
<comment type="interaction">
    <interactant intactId="EBI-724076">
        <id>Q99750</id>
    </interactant>
    <interactant intactId="EBI-9090990">
        <id>Q5W5X9-3</id>
        <label>TTC23</label>
    </interactant>
    <organismsDiffer>false</organismsDiffer>
    <experiments>3</experiments>
</comment>
<comment type="interaction">
    <interactant intactId="EBI-724076">
        <id>Q99750</id>
    </interactant>
    <interactant intactId="EBI-7844656">
        <id>Q6ZVT0</id>
        <label>TTLL10</label>
    </interactant>
    <organismsDiffer>false</organismsDiffer>
    <experiments>3</experiments>
</comment>
<comment type="interaction">
    <interactant intactId="EBI-724076">
        <id>Q99750</id>
    </interactant>
    <interactant intactId="EBI-11979997">
        <id>Q6ZVT0-3</id>
        <label>TTLL10</label>
    </interactant>
    <organismsDiffer>false</organismsDiffer>
    <experiments>3</experiments>
</comment>
<comment type="interaction">
    <interactant intactId="EBI-724076">
        <id>Q99750</id>
    </interactant>
    <interactant intactId="EBI-1052725">
        <id>O75896</id>
        <label>TUSC2</label>
    </interactant>
    <organismsDiffer>false</organismsDiffer>
    <experiments>7</experiments>
</comment>
<comment type="interaction">
    <interactant intactId="EBI-724076">
        <id>Q99750</id>
    </interactant>
    <interactant intactId="EBI-2932492">
        <id>Q99757</id>
        <label>TXN2</label>
    </interactant>
    <organismsDiffer>false</organismsDiffer>
    <experiments>3</experiments>
</comment>
<comment type="interaction">
    <interactant intactId="EBI-724076">
        <id>Q99750</id>
    </interactant>
    <interactant intactId="EBI-742060">
        <id>Q8TAI1</id>
        <label>TYMSOS</label>
    </interactant>
    <organismsDiffer>false</organismsDiffer>
    <experiments>4</experiments>
</comment>
<comment type="interaction">
    <interactant intactId="EBI-724076">
        <id>Q99750</id>
    </interactant>
    <interactant intactId="EBI-3951628">
        <id>Q06418</id>
        <label>TYRO3</label>
    </interactant>
    <organismsDiffer>false</organismsDiffer>
    <experiments>3</experiments>
</comment>
<comment type="interaction">
    <interactant intactId="EBI-724076">
        <id>Q99750</id>
    </interactant>
    <interactant intactId="EBI-2511991">
        <id>Q9Y2K6</id>
        <label>USP20</label>
    </interactant>
    <organismsDiffer>false</organismsDiffer>
    <experiments>6</experiments>
</comment>
<comment type="interaction">
    <interactant intactId="EBI-724076">
        <id>Q99750</id>
    </interactant>
    <interactant intactId="EBI-10249550">
        <id>Q6EMK4</id>
        <label>VASN</label>
    </interactant>
    <organismsDiffer>false</organismsDiffer>
    <experiments>3</experiments>
</comment>
<comment type="interaction">
    <interactant intactId="EBI-724076">
        <id>Q99750</id>
    </interactant>
    <interactant intactId="EBI-11957216">
        <id>A8MV65-2</id>
        <label>VGLL3</label>
    </interactant>
    <organismsDiffer>false</organismsDiffer>
    <experiments>3</experiments>
</comment>
<comment type="interaction">
    <interactant intactId="EBI-724076">
        <id>Q99750</id>
    </interactant>
    <interactant intactId="EBI-301246">
        <id>P40337</id>
        <label>VHL</label>
    </interactant>
    <organismsDiffer>false</organismsDiffer>
    <experiments>4</experiments>
</comment>
<comment type="interaction">
    <interactant intactId="EBI-724076">
        <id>Q99750</id>
    </interactant>
    <interactant intactId="EBI-12157263">
        <id>P40337-2</id>
        <label>VHL</label>
    </interactant>
    <organismsDiffer>false</organismsDiffer>
    <experiments>4</experiments>
</comment>
<comment type="interaction">
    <interactant intactId="EBI-724076">
        <id>Q99750</id>
    </interactant>
    <interactant intactId="EBI-399189">
        <id>Q15906</id>
        <label>VPS72</label>
    </interactant>
    <organismsDiffer>false</organismsDiffer>
    <experiments>4</experiments>
</comment>
<comment type="interaction">
    <interactant intactId="EBI-724076">
        <id>Q99750</id>
    </interactant>
    <interactant intactId="EBI-4311759">
        <id>Q8IW00</id>
        <label>VSTM4</label>
    </interactant>
    <organismsDiffer>false</organismsDiffer>
    <experiments>3</experiments>
</comment>
<comment type="interaction">
    <interactant intactId="EBI-724076">
        <id>Q99750</id>
    </interactant>
    <interactant intactId="EBI-8058160">
        <id>O96014</id>
        <label>WNT11</label>
    </interactant>
    <organismsDiffer>false</organismsDiffer>
    <experiments>9</experiments>
</comment>
<comment type="interaction">
    <interactant intactId="EBI-724076">
        <id>Q99750</id>
    </interactant>
    <interactant intactId="EBI-765538">
        <id>P25490</id>
        <label>YY1</label>
    </interactant>
    <organismsDiffer>false</organismsDiffer>
    <experiments>3</experiments>
</comment>
<comment type="interaction">
    <interactant intactId="EBI-724076">
        <id>Q99750</id>
    </interactant>
    <interactant intactId="EBI-744471">
        <id>O43167</id>
        <label>ZBTB24</label>
    </interactant>
    <organismsDiffer>false</organismsDiffer>
    <experiments>11</experiments>
</comment>
<comment type="interaction">
    <interactant intactId="EBI-724076">
        <id>Q99750</id>
    </interactant>
    <interactant intactId="EBI-739899">
        <id>P24278</id>
        <label>ZBTB25</label>
    </interactant>
    <organismsDiffer>false</organismsDiffer>
    <experiments>2</experiments>
</comment>
<comment type="interaction">
    <interactant intactId="EBI-724076">
        <id>Q99750</id>
    </interactant>
    <interactant intactId="EBI-12287587">
        <id>B2RXF5</id>
        <label>ZBTB42</label>
    </interactant>
    <organismsDiffer>false</organismsDiffer>
    <experiments>3</experiments>
</comment>
<comment type="interaction">
    <interactant intactId="EBI-724076">
        <id>Q99750</id>
    </interactant>
    <interactant intactId="EBI-395708">
        <id>Q96C00</id>
        <label>ZBTB9</label>
    </interactant>
    <organismsDiffer>false</organismsDiffer>
    <experiments>6</experiments>
</comment>
<comment type="interaction">
    <interactant intactId="EBI-724076">
        <id>Q99750</id>
    </interactant>
    <interactant intactId="EBI-922540">
        <id>Q7Z2W4</id>
        <label>ZC3HAV1</label>
    </interactant>
    <organismsDiffer>false</organismsDiffer>
    <experiments>3</experiments>
</comment>
<comment type="interaction">
    <interactant intactId="EBI-724076">
        <id>Q99750</id>
    </interactant>
    <interactant intactId="EBI-2818796">
        <id>Q8WTX9</id>
        <label>ZDHHC1</label>
    </interactant>
    <organismsDiffer>false</organismsDiffer>
    <experiments>3</experiments>
</comment>
<comment type="interaction">
    <interactant intactId="EBI-724076">
        <id>Q99750</id>
    </interactant>
    <interactant intactId="EBI-750052">
        <id>Q9Y260</id>
        <label>ZFAB</label>
    </interactant>
    <organismsDiffer>false</organismsDiffer>
    <experiments>4</experiments>
</comment>
<comment type="interaction">
    <interactant intactId="EBI-724076">
        <id>Q99750</id>
    </interactant>
    <interactant intactId="EBI-8656416">
        <id>Q68DK2-5</id>
        <label>ZFYVE26</label>
    </interactant>
    <organismsDiffer>false</organismsDiffer>
    <experiments>7</experiments>
</comment>
<comment type="interaction">
    <interactant intactId="EBI-724076">
        <id>Q99750</id>
    </interactant>
    <interactant intactId="EBI-11962760">
        <id>Q9NZV7</id>
        <label>ZIM2</label>
    </interactant>
    <organismsDiffer>false</organismsDiffer>
    <experiments>3</experiments>
</comment>
<comment type="interaction">
    <interactant intactId="EBI-724076">
        <id>Q99750</id>
    </interactant>
    <interactant intactId="EBI-5278328">
        <id>Q8IZC7</id>
        <label>ZNF101</label>
    </interactant>
    <organismsDiffer>false</organismsDiffer>
    <experiments>6</experiments>
</comment>
<comment type="interaction">
    <interactant intactId="EBI-724076">
        <id>Q99750</id>
    </interactant>
    <interactant intactId="EBI-11278550">
        <id>P17014</id>
        <label>ZNF12</label>
    </interactant>
    <organismsDiffer>false</organismsDiffer>
    <experiments>3</experiments>
</comment>
<comment type="interaction">
    <interactant intactId="EBI-724076">
        <id>Q99750</id>
    </interactant>
    <interactant intactId="EBI-2555767">
        <id>Q15973</id>
        <label>ZNF124</label>
    </interactant>
    <organismsDiffer>false</organismsDiffer>
    <experiments>6</experiments>
</comment>
<comment type="interaction">
    <interactant intactId="EBI-724076">
        <id>Q99750</id>
    </interactant>
    <interactant intactId="EBI-749129">
        <id>P52737</id>
        <label>ZNF136</label>
    </interactant>
    <organismsDiffer>false</organismsDiffer>
    <experiments>12</experiments>
</comment>
<comment type="interaction">
    <interactant intactId="EBI-724076">
        <id>Q99750</id>
    </interactant>
    <interactant intactId="EBI-10746567">
        <id>P52744</id>
        <label>ZNF138</label>
    </interactant>
    <organismsDiffer>false</organismsDiffer>
    <experiments>3</experiments>
</comment>
<comment type="interaction">
    <interactant intactId="EBI-724076">
        <id>Q99750</id>
    </interactant>
    <interactant intactId="EBI-10213071">
        <id>P52744-2</id>
        <label>ZNF138</label>
    </interactant>
    <organismsDiffer>false</organismsDiffer>
    <experiments>3</experiments>
</comment>
<comment type="interaction">
    <interactant intactId="EBI-724076">
        <id>Q99750</id>
    </interactant>
    <interactant intactId="EBI-10747670">
        <id>Q12901</id>
        <label>ZNF155</label>
    </interactant>
    <organismsDiffer>false</organismsDiffer>
    <experiments>3</experiments>
</comment>
<comment type="interaction">
    <interactant intactId="EBI-724076">
        <id>Q99750</id>
    </interactant>
    <interactant intactId="EBI-10227379">
        <id>Q12901-2</id>
        <label>ZNF155</label>
    </interactant>
    <organismsDiffer>false</organismsDiffer>
    <experiments>3</experiments>
</comment>
<comment type="interaction">
    <interactant intactId="EBI-724076">
        <id>Q99750</id>
    </interactant>
    <interactant intactId="EBI-14513896">
        <id>Q9UK13</id>
        <label>ZNF221</label>
    </interactant>
    <organismsDiffer>false</organismsDiffer>
    <experiments>3</experiments>
</comment>
<comment type="interaction">
    <interactant intactId="EBI-724076">
        <id>Q99750</id>
    </interactant>
    <interactant intactId="EBI-10322867">
        <id>Q9UK11</id>
        <label>ZNF223</label>
    </interactant>
    <organismsDiffer>false</organismsDiffer>
    <experiments>7</experiments>
</comment>
<comment type="interaction">
    <interactant intactId="EBI-724076">
        <id>Q99750</id>
    </interactant>
    <interactant intactId="EBI-5657766">
        <id>P17027</id>
        <label>ZNF23</label>
    </interactant>
    <organismsDiffer>false</organismsDiffer>
    <experiments>3</experiments>
</comment>
<comment type="interaction">
    <interactant intactId="EBI-724076">
        <id>Q99750</id>
    </interactant>
    <interactant intactId="EBI-1105361">
        <id>Q9UIE0</id>
        <label>ZNF230</label>
    </interactant>
    <organismsDiffer>false</organismsDiffer>
    <experiments>3</experiments>
</comment>
<comment type="interaction">
    <interactant intactId="EBI-724076">
        <id>Q99750</id>
    </interactant>
    <interactant intactId="EBI-4395808">
        <id>O43296</id>
        <label>ZNF264</label>
    </interactant>
    <organismsDiffer>false</organismsDiffer>
    <experiments>3</experiments>
</comment>
<comment type="interaction">
    <interactant intactId="EBI-724076">
        <id>Q99750</id>
    </interactant>
    <interactant intactId="EBI-2826570">
        <id>Q14C61</id>
        <label>ZNF264</label>
    </interactant>
    <organismsDiffer>false</organismsDiffer>
    <experiments>3</experiments>
</comment>
<comment type="interaction">
    <interactant intactId="EBI-724076">
        <id>Q99750</id>
    </interactant>
    <interactant intactId="EBI-7115319">
        <id>Q14584</id>
        <label>ZNF266</label>
    </interactant>
    <organismsDiffer>false</organismsDiffer>
    <experiments>6</experiments>
</comment>
<comment type="interaction">
    <interactant intactId="EBI-724076">
        <id>Q99750</id>
    </interactant>
    <interactant intactId="EBI-373456">
        <id>Q9Y3S2</id>
        <label>ZNF330</label>
    </interactant>
    <organismsDiffer>false</organismsDiffer>
    <experiments>3</experiments>
</comment>
<comment type="interaction">
    <interactant intactId="EBI-724076">
        <id>Q99750</id>
    </interactant>
    <interactant intactId="EBI-347633">
        <id>Q9H9D4</id>
        <label>ZNF408</label>
    </interactant>
    <organismsDiffer>false</organismsDiffer>
    <experiments>6</experiments>
</comment>
<comment type="interaction">
    <interactant intactId="EBI-724076">
        <id>Q99750</id>
    </interactant>
    <interactant intactId="EBI-744257">
        <id>Q96IQ9</id>
        <label>ZNF414</label>
    </interactant>
    <organismsDiffer>false</organismsDiffer>
    <experiments>3</experiments>
</comment>
<comment type="interaction">
    <interactant intactId="EBI-724076">
        <id>Q99750</id>
    </interactant>
    <interactant intactId="EBI-740727">
        <id>Q8TAU3</id>
        <label>ZNF417</label>
    </interactant>
    <organismsDiffer>false</organismsDiffer>
    <experiments>7</experiments>
</comment>
<comment type="interaction">
    <interactant intactId="EBI-724076">
        <id>Q99750</id>
    </interactant>
    <interactant intactId="EBI-10267553">
        <id>Q8N7K0</id>
        <label>ZNF433</label>
    </interactant>
    <organismsDiffer>false</organismsDiffer>
    <experiments>3</experiments>
</comment>
<comment type="interaction">
    <interactant intactId="EBI-724076">
        <id>Q99750</id>
    </interactant>
    <interactant intactId="EBI-11962468">
        <id>Q7Z4V0</id>
        <label>ZNF438</label>
    </interactant>
    <organismsDiffer>false</organismsDiffer>
    <experiments>3</experiments>
</comment>
<comment type="interaction">
    <interactant intactId="EBI-724076">
        <id>Q99750</id>
    </interactant>
    <interactant intactId="EBI-747580">
        <id>Q8NDP4</id>
        <label>ZNF439</label>
    </interactant>
    <organismsDiffer>false</organismsDiffer>
    <experiments>8</experiments>
</comment>
<comment type="interaction">
    <interactant intactId="EBI-724076">
        <id>Q99750</id>
    </interactant>
    <interactant intactId="EBI-726439">
        <id>Q8IYI8</id>
        <label>ZNF440</label>
    </interactant>
    <organismsDiffer>false</organismsDiffer>
    <experiments>10</experiments>
</comment>
<comment type="interaction">
    <interactant intactId="EBI-724076">
        <id>Q99750</id>
    </interactant>
    <interactant intactId="EBI-17216366">
        <id>Q8N8Z8</id>
        <label>ZNF441</label>
    </interactant>
    <organismsDiffer>false</organismsDiffer>
    <experiments>3</experiments>
</comment>
<comment type="interaction">
    <interactant intactId="EBI-724076">
        <id>Q99750</id>
    </interactant>
    <interactant intactId="EBI-740232">
        <id>Q9NWS9-2</id>
        <label>ZNF446</label>
    </interactant>
    <organismsDiffer>false</organismsDiffer>
    <experiments>3</experiments>
</comment>
<comment type="interaction">
    <interactant intactId="EBI-724076">
        <id>Q99750</id>
    </interactant>
    <interactant intactId="EBI-10271693">
        <id>Q8TAF7</id>
        <label>ZNF461</label>
    </interactant>
    <organismsDiffer>false</organismsDiffer>
    <experiments>3</experiments>
</comment>
<comment type="interaction">
    <interactant intactId="EBI-724076">
        <id>Q99750</id>
    </interactant>
    <interactant intactId="EBI-10820574">
        <id>Q96JC4</id>
        <label>ZNF479</label>
    </interactant>
    <organismsDiffer>false</organismsDiffer>
    <experiments>3</experiments>
</comment>
<comment type="interaction">
    <interactant intactId="EBI-724076">
        <id>Q99750</id>
    </interactant>
    <interactant intactId="EBI-1105370">
        <id>Q9ULM2</id>
        <label>ZNF490</label>
    </interactant>
    <organismsDiffer>false</organismsDiffer>
    <experiments>7</experiments>
</comment>
<comment type="interaction">
    <interactant intactId="EBI-724076">
        <id>Q99750</id>
    </interactant>
    <interactant intactId="EBI-12019860">
        <id>Q8N8L2</id>
        <label>ZNF491</label>
    </interactant>
    <organismsDiffer>false</organismsDiffer>
    <experiments>5</experiments>
</comment>
<comment type="interaction">
    <interactant intactId="EBI-724076">
        <id>Q99750</id>
    </interactant>
    <interactant intactId="EBI-10486136">
        <id>Q6ZNH5</id>
        <label>ZNF497</label>
    </interactant>
    <organismsDiffer>false</organismsDiffer>
    <experiments>3</experiments>
</comment>
<comment type="interaction">
    <interactant intactId="EBI-724076">
        <id>Q99750</id>
    </interactant>
    <interactant intactId="EBI-1049952">
        <id>Q96KM6</id>
        <label>ZNF512B</label>
    </interactant>
    <organismsDiffer>false</organismsDiffer>
    <experiments>3</experiments>
</comment>
<comment type="interaction">
    <interactant intactId="EBI-724076">
        <id>Q99750</id>
    </interactant>
    <interactant intactId="EBI-10283126">
        <id>Q96C55</id>
        <label>ZNF524</label>
    </interactant>
    <organismsDiffer>false</organismsDiffer>
    <experiments>3</experiments>
</comment>
<comment type="interaction">
    <interactant intactId="EBI-724076">
        <id>Q99750</id>
    </interactant>
    <interactant intactId="EBI-746605">
        <id>Q9BR84</id>
        <label>ZNF559</label>
    </interactant>
    <organismsDiffer>false</organismsDiffer>
    <experiments>8</experiments>
</comment>
<comment type="interaction">
    <interactant intactId="EBI-724076">
        <id>Q99750</id>
    </interactant>
    <interactant intactId="EBI-10273713">
        <id>Q8TBZ8</id>
        <label>ZNF564</label>
    </interactant>
    <organismsDiffer>false</organismsDiffer>
    <experiments>6</experiments>
</comment>
<comment type="interaction">
    <interactant intactId="EBI-724076">
        <id>Q99750</id>
    </interactant>
    <interactant intactId="EBI-10172590">
        <id>Q7Z3I7</id>
        <label>ZNF572</label>
    </interactant>
    <organismsDiffer>false</organismsDiffer>
    <experiments>3</experiments>
</comment>
<comment type="interaction">
    <interactant intactId="EBI-724076">
        <id>Q99750</id>
    </interactant>
    <interactant intactId="EBI-14069183">
        <id>Q86XF7</id>
        <label>ZNF575</label>
    </interactant>
    <organismsDiffer>false</organismsDiffer>
    <experiments>3</experiments>
</comment>
<comment type="interaction">
    <interactant intactId="EBI-724076">
        <id>Q99750</id>
    </interactant>
    <interactant intactId="EBI-10241108">
        <id>Q3MI94</id>
        <label>ZNF578</label>
    </interactant>
    <organismsDiffer>false</organismsDiffer>
    <experiments>3</experiments>
</comment>
<comment type="interaction">
    <interactant intactId="EBI-724076">
        <id>Q99750</id>
    </interactant>
    <interactant intactId="EBI-11955189">
        <id>Q96N58</id>
        <label>ZNF578</label>
    </interactant>
    <organismsDiffer>false</organismsDiffer>
    <experiments>3</experiments>
</comment>
<comment type="interaction">
    <interactant intactId="EBI-724076">
        <id>Q99750</id>
    </interactant>
    <interactant intactId="EBI-746277">
        <id>Q9UK33</id>
        <label>ZNF580</label>
    </interactant>
    <organismsDiffer>false</organismsDiffer>
    <experiments>3</experiments>
</comment>
<comment type="interaction">
    <interactant intactId="EBI-724076">
        <id>Q99750</id>
    </interactant>
    <interactant intactId="EBI-745520">
        <id>Q9P0T4</id>
        <label>ZNF581</label>
    </interactant>
    <organismsDiffer>false</organismsDiffer>
    <experiments>8</experiments>
</comment>
<comment type="interaction">
    <interactant intactId="EBI-724076">
        <id>Q99750</id>
    </interactant>
    <interactant intactId="EBI-6427977">
        <id>Q96SQ5</id>
        <label>ZNF587</label>
    </interactant>
    <organismsDiffer>false</organismsDiffer>
    <experiments>8</experiments>
</comment>
<comment type="interaction">
    <interactant intactId="EBI-724076">
        <id>Q99750</id>
    </interactant>
    <interactant intactId="EBI-747175">
        <id>Q96SK3</id>
        <label>ZNF607</label>
    </interactant>
    <organismsDiffer>false</organismsDiffer>
    <experiments>4</experiments>
</comment>
<comment type="interaction">
    <interactant intactId="EBI-724076">
        <id>Q99750</id>
    </interactant>
    <interactant intactId="EBI-12062855">
        <id>Q6PF04</id>
        <label>ZNF613</label>
    </interactant>
    <organismsDiffer>false</organismsDiffer>
    <experiments>3</experiments>
</comment>
<comment type="interaction">
    <interactant intactId="EBI-724076">
        <id>Q99750</id>
    </interactant>
    <interactant intactId="EBI-745608">
        <id>O15015</id>
        <label>ZNF646</label>
    </interactant>
    <organismsDiffer>false</organismsDiffer>
    <experiments>3</experiments>
</comment>
<comment type="interaction">
    <interactant intactId="EBI-724076">
        <id>Q99750</id>
    </interactant>
    <interactant intactId="EBI-11985915">
        <id>Q5T619</id>
        <label>ZNF648</label>
    </interactant>
    <organismsDiffer>false</organismsDiffer>
    <experiments>5</experiments>
</comment>
<comment type="interaction">
    <interactant intactId="EBI-724076">
        <id>Q99750</id>
    </interactant>
    <interactant intactId="EBI-10255155">
        <id>Q6ZS27-3</id>
        <label>ZNF662</label>
    </interactant>
    <organismsDiffer>false</organismsDiffer>
    <experiments>3</experiments>
</comment>
<comment type="interaction">
    <interactant intactId="EBI-724076">
        <id>Q99750</id>
    </interactant>
    <interactant intactId="EBI-12006574">
        <id>Q96BR6</id>
        <label>ZNF669</label>
    </interactant>
    <organismsDiffer>false</organismsDiffer>
    <experiments>3</experiments>
</comment>
<comment type="interaction">
    <interactant intactId="EBI-724076">
        <id>Q99750</id>
    </interactant>
    <interactant intactId="EBI-745276">
        <id>Q9BS34</id>
        <label>ZNF670</label>
    </interactant>
    <organismsDiffer>false</organismsDiffer>
    <experiments>5</experiments>
</comment>
<comment type="interaction">
    <interactant intactId="EBI-724076">
        <id>Q99750</id>
    </interactant>
    <interactant intactId="EBI-745567">
        <id>Q8IYX0</id>
        <label>ZNF679</label>
    </interactant>
    <organismsDiffer>false</organismsDiffer>
    <experiments>4</experiments>
</comment>
<comment type="interaction">
    <interactant intactId="EBI-724076">
        <id>Q99750</id>
    </interactant>
    <interactant intactId="EBI-16429014">
        <id>A0A0S2Z5X4</id>
        <label>ZNF688</label>
    </interactant>
    <organismsDiffer>false</organismsDiffer>
    <experiments>3</experiments>
</comment>
<comment type="interaction">
    <interactant intactId="EBI-724076">
        <id>Q99750</id>
    </interactant>
    <interactant intactId="EBI-11090299">
        <id>Q9H7X3</id>
        <label>ZNF696</label>
    </interactant>
    <organismsDiffer>false</organismsDiffer>
    <experiments>4</experiments>
</comment>
<comment type="interaction">
    <interactant intactId="EBI-724076">
        <id>Q99750</id>
    </interactant>
    <interactant intactId="EBI-748111">
        <id>Q96C28</id>
        <label>ZNF707</label>
    </interactant>
    <organismsDiffer>false</organismsDiffer>
    <experiments>5</experiments>
</comment>
<comment type="interaction">
    <interactant intactId="EBI-724076">
        <id>Q99750</id>
    </interactant>
    <interactant intactId="EBI-745775">
        <id>Q96H86</id>
        <label>ZNF764</label>
    </interactant>
    <organismsDiffer>false</organismsDiffer>
    <experiments>4</experiments>
</comment>
<comment type="interaction">
    <interactant intactId="EBI-724076">
        <id>Q99750</id>
    </interactant>
    <interactant intactId="EBI-7138303">
        <id>Q8NCA9</id>
        <label>ZNF784</label>
    </interactant>
    <organismsDiffer>false</organismsDiffer>
    <experiments>3</experiments>
</comment>
<comment type="interaction">
    <interactant intactId="EBI-724076">
        <id>Q99750</id>
    </interactant>
    <interactant intactId="EBI-3925400">
        <id>A8K8V0</id>
        <label>ZNF785</label>
    </interactant>
    <organismsDiffer>false</organismsDiffer>
    <experiments>3</experiments>
</comment>
<comment type="interaction">
    <interactant intactId="EBI-724076">
        <id>Q99750</id>
    </interactant>
    <interactant intactId="EBI-10265203">
        <id>Q8N393</id>
        <label>ZNF786</label>
    </interactant>
    <organismsDiffer>false</organismsDiffer>
    <experiments>3</experiments>
</comment>
<comment type="interaction">
    <interactant intactId="EBI-724076">
        <id>Q99750</id>
    </interactant>
    <interactant intactId="EBI-10237274">
        <id>Q15937</id>
        <label>ZNF79</label>
    </interactant>
    <organismsDiffer>false</organismsDiffer>
    <experiments>3</experiments>
</comment>
<comment type="interaction">
    <interactant intactId="EBI-724076">
        <id>Q99750</id>
    </interactant>
    <interactant intactId="EBI-11962574">
        <id>Q96EG3</id>
        <label>ZNF837</label>
    </interactant>
    <organismsDiffer>false</organismsDiffer>
    <experiments>3</experiments>
</comment>
<comment type="interaction">
    <interactant intactId="EBI-724076">
        <id>Q99750</id>
    </interactant>
    <interactant intactId="EBI-10225757">
        <id>Q08AG5</id>
        <label>ZNF844</label>
    </interactant>
    <organismsDiffer>false</organismsDiffer>
    <experiments>6</experiments>
</comment>
<comment type="interaction">
    <interactant intactId="EBI-724076">
        <id>Q99750</id>
    </interactant>
    <interactant intactId="EBI-347522">
        <id>O43257</id>
        <label>ZNHIT1</label>
    </interactant>
    <organismsDiffer>false</organismsDiffer>
    <experiments>3</experiments>
</comment>
<comment type="interaction">
    <interactant intactId="EBI-724076">
        <id>Q99750</id>
    </interactant>
    <interactant intactId="EBI-10243533">
        <id>Q5BKY6</id>
    </interactant>
    <organismsDiffer>false</organismsDiffer>
    <experiments>3</experiments>
</comment>
<comment type="interaction">
    <interactant intactId="EBI-724076">
        <id>Q99750</id>
    </interactant>
    <interactant intactId="EBI-10248148">
        <id>Q5W150</id>
    </interactant>
    <organismsDiffer>false</organismsDiffer>
    <experiments>3</experiments>
</comment>
<comment type="interaction">
    <interactant intactId="EBI-724076">
        <id>Q99750</id>
    </interactant>
    <interactant intactId="EBI-10248413">
        <id>Q5XG85</id>
    </interactant>
    <organismsDiffer>false</organismsDiffer>
    <experiments>3</experiments>
</comment>
<comment type="interaction">
    <interactant intactId="EBI-724076">
        <id>Q99750</id>
    </interactant>
    <interactant intactId="EBI-3957603">
        <id>P09022</id>
        <label>Hoxa1</label>
    </interactant>
    <organismsDiffer>true</organismsDiffer>
    <experiments>3</experiments>
</comment>
<comment type="subcellular location">
    <subcellularLocation>
        <location evidence="1">Nucleus</location>
    </subcellularLocation>
    <subcellularLocation>
        <location evidence="2">Cytoplasm</location>
    </subcellularLocation>
</comment>
<comment type="similarity">
    <text evidence="6">Belongs to the MDFI family.</text>
</comment>
<name>MDFI_HUMAN</name>
<organism>
    <name type="scientific">Homo sapiens</name>
    <name type="common">Human</name>
    <dbReference type="NCBI Taxonomy" id="9606"/>
    <lineage>
        <taxon>Eukaryota</taxon>
        <taxon>Metazoa</taxon>
        <taxon>Chordata</taxon>
        <taxon>Craniata</taxon>
        <taxon>Vertebrata</taxon>
        <taxon>Euteleostomi</taxon>
        <taxon>Mammalia</taxon>
        <taxon>Eutheria</taxon>
        <taxon>Euarchontoglires</taxon>
        <taxon>Primates</taxon>
        <taxon>Haplorrhini</taxon>
        <taxon>Catarrhini</taxon>
        <taxon>Hominidae</taxon>
        <taxon>Homo</taxon>
    </lineage>
</organism>
<protein>
    <recommendedName>
        <fullName>MyoD family inhibitor</fullName>
    </recommendedName>
    <alternativeName>
        <fullName>Myogenic repressor I-mf</fullName>
    </alternativeName>
</protein>
<dbReference type="EMBL" id="U78313">
    <property type="protein sequence ID" value="AAB39748.1"/>
    <property type="molecule type" value="mRNA"/>
</dbReference>
<dbReference type="EMBL" id="AL035588">
    <property type="status" value="NOT_ANNOTATED_CDS"/>
    <property type="molecule type" value="Genomic_DNA"/>
</dbReference>
<dbReference type="EMBL" id="BC007836">
    <property type="protein sequence ID" value="AAH07836.1"/>
    <property type="molecule type" value="mRNA"/>
</dbReference>
<dbReference type="CCDS" id="CCDS4857.1"/>
<dbReference type="RefSeq" id="NP_001287733.1">
    <property type="nucleotide sequence ID" value="NM_001300804.2"/>
</dbReference>
<dbReference type="RefSeq" id="NP_001287734.1">
    <property type="nucleotide sequence ID" value="NM_001300805.1"/>
</dbReference>
<dbReference type="RefSeq" id="NP_001287735.1">
    <property type="nucleotide sequence ID" value="NM_001300806.2"/>
</dbReference>
<dbReference type="RefSeq" id="NP_005577.1">
    <property type="nucleotide sequence ID" value="NM_005586.4"/>
</dbReference>
<dbReference type="RefSeq" id="XP_047274733.1">
    <property type="nucleotide sequence ID" value="XM_047418777.1"/>
</dbReference>
<dbReference type="RefSeq" id="XP_047274734.1">
    <property type="nucleotide sequence ID" value="XM_047418778.1"/>
</dbReference>
<dbReference type="RefSeq" id="XP_054211419.1">
    <property type="nucleotide sequence ID" value="XM_054355444.1"/>
</dbReference>
<dbReference type="SMR" id="Q99750"/>
<dbReference type="BioGRID" id="110353">
    <property type="interactions" value="520"/>
</dbReference>
<dbReference type="FunCoup" id="Q99750">
    <property type="interactions" value="786"/>
</dbReference>
<dbReference type="IntAct" id="Q99750">
    <property type="interactions" value="427"/>
</dbReference>
<dbReference type="MINT" id="Q99750"/>
<dbReference type="STRING" id="9606.ENSP00000230321"/>
<dbReference type="TCDB" id="1.A.75.1.1">
    <property type="family name" value="the mechanical nociceptor, piezo (piezo) family"/>
</dbReference>
<dbReference type="TCDB" id="1.A.75.1.2">
    <property type="family name" value="the mechanical nociceptor, piezo (piezo) family"/>
</dbReference>
<dbReference type="iPTMnet" id="Q99750"/>
<dbReference type="PhosphoSitePlus" id="Q99750"/>
<dbReference type="BioMuta" id="MDFI"/>
<dbReference type="DMDM" id="25090674"/>
<dbReference type="jPOST" id="Q99750"/>
<dbReference type="MassIVE" id="Q99750"/>
<dbReference type="PaxDb" id="9606-ENSP00000230321"/>
<dbReference type="PeptideAtlas" id="Q99750"/>
<dbReference type="ProteomicsDB" id="78457"/>
<dbReference type="Antibodypedia" id="30051">
    <property type="antibodies" value="165 antibodies from 30 providers"/>
</dbReference>
<dbReference type="DNASU" id="4188"/>
<dbReference type="Ensembl" id="ENST00000230321.11">
    <property type="protein sequence ID" value="ENSP00000230321.6"/>
    <property type="gene ID" value="ENSG00000112559.15"/>
</dbReference>
<dbReference type="Ensembl" id="ENST00000373051.6">
    <property type="protein sequence ID" value="ENSP00000362142.2"/>
    <property type="gene ID" value="ENSG00000112559.15"/>
</dbReference>
<dbReference type="GeneID" id="4188"/>
<dbReference type="KEGG" id="hsa:4188"/>
<dbReference type="MANE-Select" id="ENST00000230321.11">
    <property type="protein sequence ID" value="ENSP00000230321.6"/>
    <property type="RefSeq nucleotide sequence ID" value="NM_005586.4"/>
    <property type="RefSeq protein sequence ID" value="NP_005577.1"/>
</dbReference>
<dbReference type="UCSC" id="uc003oqq.5">
    <property type="organism name" value="human"/>
</dbReference>
<dbReference type="AGR" id="HGNC:6967"/>
<dbReference type="CTD" id="4188"/>
<dbReference type="DisGeNET" id="4188"/>
<dbReference type="GeneCards" id="MDFI"/>
<dbReference type="HGNC" id="HGNC:6967">
    <property type="gene designation" value="MDFI"/>
</dbReference>
<dbReference type="HPA" id="ENSG00000112559">
    <property type="expression patterns" value="Tissue enhanced (esophagus)"/>
</dbReference>
<dbReference type="MIM" id="604971">
    <property type="type" value="gene"/>
</dbReference>
<dbReference type="neXtProt" id="NX_Q99750"/>
<dbReference type="OpenTargets" id="ENSG00000112559"/>
<dbReference type="PharmGKB" id="PA30713"/>
<dbReference type="VEuPathDB" id="HostDB:ENSG00000112559"/>
<dbReference type="eggNOG" id="ENOG502RZMC">
    <property type="taxonomic scope" value="Eukaryota"/>
</dbReference>
<dbReference type="GeneTree" id="ENSGT00940000160187"/>
<dbReference type="HOGENOM" id="CLU_067479_1_0_1"/>
<dbReference type="InParanoid" id="Q99750"/>
<dbReference type="OMA" id="MPQGNDP"/>
<dbReference type="OrthoDB" id="8958154at2759"/>
<dbReference type="PAN-GO" id="Q99750">
    <property type="GO annotations" value="2 GO annotations based on evolutionary models"/>
</dbReference>
<dbReference type="PhylomeDB" id="Q99750"/>
<dbReference type="TreeFam" id="TF332113"/>
<dbReference type="PathwayCommons" id="Q99750"/>
<dbReference type="SignaLink" id="Q99750"/>
<dbReference type="SIGNOR" id="Q99750"/>
<dbReference type="BioGRID-ORCS" id="4188">
    <property type="hits" value="9 hits in 1129 CRISPR screens"/>
</dbReference>
<dbReference type="ChiTaRS" id="MDFI">
    <property type="organism name" value="human"/>
</dbReference>
<dbReference type="GeneWiki" id="MDFI"/>
<dbReference type="GenomeRNAi" id="4188"/>
<dbReference type="Pharos" id="Q99750">
    <property type="development level" value="Tbio"/>
</dbReference>
<dbReference type="PRO" id="PR:Q99750"/>
<dbReference type="Proteomes" id="UP000005640">
    <property type="component" value="Chromosome 6"/>
</dbReference>
<dbReference type="RNAct" id="Q99750">
    <property type="molecule type" value="protein"/>
</dbReference>
<dbReference type="Bgee" id="ENSG00000112559">
    <property type="expression patterns" value="Expressed in ganglionic eminence and 133 other cell types or tissues"/>
</dbReference>
<dbReference type="ExpressionAtlas" id="Q99750">
    <property type="expression patterns" value="baseline and differential"/>
</dbReference>
<dbReference type="GO" id="GO:0005737">
    <property type="term" value="C:cytoplasm"/>
    <property type="evidence" value="ECO:0000304"/>
    <property type="project" value="ProtInc"/>
</dbReference>
<dbReference type="GO" id="GO:0005634">
    <property type="term" value="C:nucleus"/>
    <property type="evidence" value="ECO:0000250"/>
    <property type="project" value="UniProtKB"/>
</dbReference>
<dbReference type="GO" id="GO:0042802">
    <property type="term" value="F:identical protein binding"/>
    <property type="evidence" value="ECO:0000353"/>
    <property type="project" value="IntAct"/>
</dbReference>
<dbReference type="GO" id="GO:0140311">
    <property type="term" value="F:protein sequestering activity"/>
    <property type="evidence" value="ECO:0000314"/>
    <property type="project" value="UniProtKB"/>
</dbReference>
<dbReference type="GO" id="GO:0140416">
    <property type="term" value="F:transcription regulator inhibitor activity"/>
    <property type="evidence" value="ECO:0000304"/>
    <property type="project" value="GO_Central"/>
</dbReference>
<dbReference type="GO" id="GO:0009950">
    <property type="term" value="P:dorsal/ventral axis specification"/>
    <property type="evidence" value="ECO:0000250"/>
    <property type="project" value="UniProtKB"/>
</dbReference>
<dbReference type="GO" id="GO:0048704">
    <property type="term" value="P:embryonic skeletal system morphogenesis"/>
    <property type="evidence" value="ECO:0007669"/>
    <property type="project" value="Ensembl"/>
</dbReference>
<dbReference type="GO" id="GO:0032507">
    <property type="term" value="P:maintenance of protein location in cell"/>
    <property type="evidence" value="ECO:0000314"/>
    <property type="project" value="UniProtKB"/>
</dbReference>
<dbReference type="GO" id="GO:0043392">
    <property type="term" value="P:negative regulation of DNA binding"/>
    <property type="evidence" value="ECO:0000250"/>
    <property type="project" value="UniProtKB"/>
</dbReference>
<dbReference type="GO" id="GO:0045892">
    <property type="term" value="P:negative regulation of DNA-templated transcription"/>
    <property type="evidence" value="ECO:0000318"/>
    <property type="project" value="GO_Central"/>
</dbReference>
<dbReference type="GO" id="GO:0000122">
    <property type="term" value="P:negative regulation of transcription by RNA polymerase II"/>
    <property type="evidence" value="ECO:0000250"/>
    <property type="project" value="UniProtKB"/>
</dbReference>
<dbReference type="GO" id="GO:0030178">
    <property type="term" value="P:negative regulation of Wnt signaling pathway"/>
    <property type="evidence" value="ECO:0000250"/>
    <property type="project" value="UniProtKB"/>
</dbReference>
<dbReference type="GO" id="GO:0046328">
    <property type="term" value="P:regulation of JNK cascade"/>
    <property type="evidence" value="ECO:0000318"/>
    <property type="project" value="GO_Central"/>
</dbReference>
<dbReference type="GO" id="GO:0030111">
    <property type="term" value="P:regulation of Wnt signaling pathway"/>
    <property type="evidence" value="ECO:0000318"/>
    <property type="project" value="GO_Central"/>
</dbReference>
<dbReference type="GO" id="GO:0060707">
    <property type="term" value="P:trophoblast giant cell differentiation"/>
    <property type="evidence" value="ECO:0007669"/>
    <property type="project" value="Ensembl"/>
</dbReference>
<dbReference type="InterPro" id="IPR026134">
    <property type="entry name" value="MDFI/MDFIC"/>
</dbReference>
<dbReference type="PANTHER" id="PTHR15304">
    <property type="entry name" value="MYOD FAMILY INHIBITOR"/>
    <property type="match status" value="1"/>
</dbReference>
<dbReference type="PANTHER" id="PTHR15304:SF1">
    <property type="entry name" value="MYOD FAMILY INHIBITOR"/>
    <property type="match status" value="1"/>
</dbReference>
<dbReference type="Pfam" id="PF15316">
    <property type="entry name" value="MDFI"/>
    <property type="match status" value="1"/>
</dbReference>
<gene>
    <name type="primary">MDFI</name>
</gene>